<reference key="1">
    <citation type="journal article" date="1996" name="Mol. Endocrinol.">
        <title>Identification of TRACs (T3 receptor-associating cofactors), a family of cofactors that associate with, and modulate the activity of, nuclear hormone receptors.</title>
        <authorList>
            <person name="Sande S."/>
            <person name="Privalsky M.L."/>
        </authorList>
    </citation>
    <scope>NUCLEOTIDE SEQUENCE [MRNA] (ISOFORM 2)</scope>
    <source>
        <tissue>Fetal liver</tissue>
    </source>
</reference>
<reference key="2">
    <citation type="journal article" date="1999" name="Proc. Natl. Acad. Sci. U.S.A.">
        <title>Unique forms of human and mouse nuclear receptor corepressor SMRT.</title>
        <authorList>
            <person name="Ordentlich P."/>
            <person name="Downes M."/>
            <person name="Xie W."/>
            <person name="Genin A."/>
            <person name="Spinner N.B."/>
            <person name="Evans R.M."/>
        </authorList>
    </citation>
    <scope>NUCLEOTIDE SEQUENCE [MRNA] (ISOFORM 3)</scope>
    <scope>FUNCTION</scope>
    <scope>TISSUE SPECIFICITY</scope>
    <scope>VARIANT THR-1699</scope>
    <source>
        <tissue>Pituitary</tissue>
    </source>
</reference>
<reference key="3">
    <citation type="journal article" date="1999" name="Proc. Natl. Acad. Sci. U.S.A.">
        <title>SMRTe, a silencing mediator for retinoid and thyroid hormone receptors-extended isoform that is more related to the nuclear receptor corepressor.</title>
        <authorList>
            <person name="Park E.J."/>
            <person name="Schroen D.J."/>
            <person name="Yang M."/>
            <person name="Li H."/>
            <person name="Li L."/>
            <person name="Chen J.D."/>
        </authorList>
    </citation>
    <scope>NUCLEOTIDE SEQUENCE [MRNA] (ISOFORM 4)</scope>
    <scope>FUNCTION</scope>
    <scope>SUBCELLULAR LOCATION</scope>
    <scope>VARIANT THR-1699</scope>
    <source>
        <tissue>Cervix adenocarcinoma</tissue>
    </source>
</reference>
<reference key="4">
    <citation type="submission" date="2005-03" db="EMBL/GenBank/DDBJ databases">
        <authorList>
            <person name="Chen J.D."/>
        </authorList>
    </citation>
    <scope>NUCLEOTIDE SEQUENCE [MRNA] (ISOFORM 4)</scope>
    <scope>VARIANT THR-1699</scope>
</reference>
<reference key="5">
    <citation type="journal article" date="2006" name="Nature">
        <title>The finished DNA sequence of human chromosome 12.</title>
        <authorList>
            <person name="Scherer S.E."/>
            <person name="Muzny D.M."/>
            <person name="Buhay C.J."/>
            <person name="Chen R."/>
            <person name="Cree A."/>
            <person name="Ding Y."/>
            <person name="Dugan-Rocha S."/>
            <person name="Gill R."/>
            <person name="Gunaratne P."/>
            <person name="Harris R.A."/>
            <person name="Hawes A.C."/>
            <person name="Hernandez J."/>
            <person name="Hodgson A.V."/>
            <person name="Hume J."/>
            <person name="Jackson A."/>
            <person name="Khan Z.M."/>
            <person name="Kovar-Smith C."/>
            <person name="Lewis L.R."/>
            <person name="Lozado R.J."/>
            <person name="Metzker M.L."/>
            <person name="Milosavljevic A."/>
            <person name="Miner G.R."/>
            <person name="Montgomery K.T."/>
            <person name="Morgan M.B."/>
            <person name="Nazareth L.V."/>
            <person name="Scott G."/>
            <person name="Sodergren E."/>
            <person name="Song X.-Z."/>
            <person name="Steffen D."/>
            <person name="Lovering R.C."/>
            <person name="Wheeler D.A."/>
            <person name="Worley K.C."/>
            <person name="Yuan Y."/>
            <person name="Zhang Z."/>
            <person name="Adams C.Q."/>
            <person name="Ansari-Lari M.A."/>
            <person name="Ayele M."/>
            <person name="Brown M.J."/>
            <person name="Chen G."/>
            <person name="Chen Z."/>
            <person name="Clerc-Blankenburg K.P."/>
            <person name="Davis C."/>
            <person name="Delgado O."/>
            <person name="Dinh H.H."/>
            <person name="Draper H."/>
            <person name="Gonzalez-Garay M.L."/>
            <person name="Havlak P."/>
            <person name="Jackson L.R."/>
            <person name="Jacob L.S."/>
            <person name="Kelly S.H."/>
            <person name="Li L."/>
            <person name="Li Z."/>
            <person name="Liu J."/>
            <person name="Liu W."/>
            <person name="Lu J."/>
            <person name="Maheshwari M."/>
            <person name="Nguyen B.-V."/>
            <person name="Okwuonu G.O."/>
            <person name="Pasternak S."/>
            <person name="Perez L.M."/>
            <person name="Plopper F.J.H."/>
            <person name="Santibanez J."/>
            <person name="Shen H."/>
            <person name="Tabor P.E."/>
            <person name="Verduzco D."/>
            <person name="Waldron L."/>
            <person name="Wang Q."/>
            <person name="Williams G.A."/>
            <person name="Zhang J."/>
            <person name="Zhou J."/>
            <person name="Allen C.C."/>
            <person name="Amin A.G."/>
            <person name="Anyalebechi V."/>
            <person name="Bailey M."/>
            <person name="Barbaria J.A."/>
            <person name="Bimage K.E."/>
            <person name="Bryant N.P."/>
            <person name="Burch P.E."/>
            <person name="Burkett C.E."/>
            <person name="Burrell K.L."/>
            <person name="Calderon E."/>
            <person name="Cardenas V."/>
            <person name="Carter K."/>
            <person name="Casias K."/>
            <person name="Cavazos I."/>
            <person name="Cavazos S.R."/>
            <person name="Ceasar H."/>
            <person name="Chacko J."/>
            <person name="Chan S.N."/>
            <person name="Chavez D."/>
            <person name="Christopoulos C."/>
            <person name="Chu J."/>
            <person name="Cockrell R."/>
            <person name="Cox C.D."/>
            <person name="Dang M."/>
            <person name="Dathorne S.R."/>
            <person name="David R."/>
            <person name="Davis C.M."/>
            <person name="Davy-Carroll L."/>
            <person name="Deshazo D.R."/>
            <person name="Donlin J.E."/>
            <person name="D'Souza L."/>
            <person name="Eaves K.A."/>
            <person name="Egan A."/>
            <person name="Emery-Cohen A.J."/>
            <person name="Escotto M."/>
            <person name="Flagg N."/>
            <person name="Forbes L.D."/>
            <person name="Gabisi A.M."/>
            <person name="Garza M."/>
            <person name="Hamilton C."/>
            <person name="Henderson N."/>
            <person name="Hernandez O."/>
            <person name="Hines S."/>
            <person name="Hogues M.E."/>
            <person name="Huang M."/>
            <person name="Idlebird D.G."/>
            <person name="Johnson R."/>
            <person name="Jolivet A."/>
            <person name="Jones S."/>
            <person name="Kagan R."/>
            <person name="King L.M."/>
            <person name="Leal B."/>
            <person name="Lebow H."/>
            <person name="Lee S."/>
            <person name="LeVan J.M."/>
            <person name="Lewis L.C."/>
            <person name="London P."/>
            <person name="Lorensuhewa L.M."/>
            <person name="Loulseged H."/>
            <person name="Lovett D.A."/>
            <person name="Lucier A."/>
            <person name="Lucier R.L."/>
            <person name="Ma J."/>
            <person name="Madu R.C."/>
            <person name="Mapua P."/>
            <person name="Martindale A.D."/>
            <person name="Martinez E."/>
            <person name="Massey E."/>
            <person name="Mawhiney S."/>
            <person name="Meador M.G."/>
            <person name="Mendez S."/>
            <person name="Mercado C."/>
            <person name="Mercado I.C."/>
            <person name="Merritt C.E."/>
            <person name="Miner Z.L."/>
            <person name="Minja E."/>
            <person name="Mitchell T."/>
            <person name="Mohabbat F."/>
            <person name="Mohabbat K."/>
            <person name="Montgomery B."/>
            <person name="Moore N."/>
            <person name="Morris S."/>
            <person name="Munidasa M."/>
            <person name="Ngo R.N."/>
            <person name="Nguyen N.B."/>
            <person name="Nickerson E."/>
            <person name="Nwaokelemeh O.O."/>
            <person name="Nwokenkwo S."/>
            <person name="Obregon M."/>
            <person name="Oguh M."/>
            <person name="Oragunye N."/>
            <person name="Oviedo R.J."/>
            <person name="Parish B.J."/>
            <person name="Parker D.N."/>
            <person name="Parrish J."/>
            <person name="Parks K.L."/>
            <person name="Paul H.A."/>
            <person name="Payton B.A."/>
            <person name="Perez A."/>
            <person name="Perrin W."/>
            <person name="Pickens A."/>
            <person name="Primus E.L."/>
            <person name="Pu L.-L."/>
            <person name="Puazo M."/>
            <person name="Quiles M.M."/>
            <person name="Quiroz J.B."/>
            <person name="Rabata D."/>
            <person name="Reeves K."/>
            <person name="Ruiz S.J."/>
            <person name="Shao H."/>
            <person name="Sisson I."/>
            <person name="Sonaike T."/>
            <person name="Sorelle R.P."/>
            <person name="Sutton A.E."/>
            <person name="Svatek A.F."/>
            <person name="Svetz L.A."/>
            <person name="Tamerisa K.S."/>
            <person name="Taylor T.R."/>
            <person name="Teague B."/>
            <person name="Thomas N."/>
            <person name="Thorn R.D."/>
            <person name="Trejos Z.Y."/>
            <person name="Trevino B.K."/>
            <person name="Ukegbu O.N."/>
            <person name="Urban J.B."/>
            <person name="Vasquez L.I."/>
            <person name="Vera V.A."/>
            <person name="Villasana D.M."/>
            <person name="Wang L."/>
            <person name="Ward-Moore S."/>
            <person name="Warren J.T."/>
            <person name="Wei X."/>
            <person name="White F."/>
            <person name="Williamson A.L."/>
            <person name="Wleczyk R."/>
            <person name="Wooden H.S."/>
            <person name="Wooden S.H."/>
            <person name="Yen J."/>
            <person name="Yoon L."/>
            <person name="Yoon V."/>
            <person name="Zorrilla S.E."/>
            <person name="Nelson D."/>
            <person name="Kucherlapati R."/>
            <person name="Weinstock G."/>
            <person name="Gibbs R.A."/>
        </authorList>
    </citation>
    <scope>NUCLEOTIDE SEQUENCE [LARGE SCALE GENOMIC DNA]</scope>
</reference>
<reference key="6">
    <citation type="submission" date="2005-03" db="EMBL/GenBank/DDBJ databases">
        <authorList>
            <person name="Totoki Y."/>
            <person name="Toyoda A."/>
            <person name="Takeda T."/>
            <person name="Sakaki Y."/>
            <person name="Tanaka A."/>
            <person name="Yokoyama S."/>
            <person name="Ohara O."/>
            <person name="Nagase T."/>
            <person name="Kikuno R.F."/>
        </authorList>
    </citation>
    <scope>NUCLEOTIDE SEQUENCE [LARGE SCALE MRNA] OF 1-1451</scope>
    <scope>VARIANT GLU-781</scope>
    <source>
        <tissue>Brain</tissue>
    </source>
</reference>
<reference key="7">
    <citation type="journal article" date="1997" name="Hum. Genet.">
        <title>cDNAs with long CAG trinucleotide repeats from human brain.</title>
        <authorList>
            <person name="Margolis R.L."/>
            <person name="Abraham M.R."/>
            <person name="Gatchell S.B."/>
            <person name="Li S.-H."/>
            <person name="Kidwai A.S."/>
            <person name="Breschel T.S."/>
            <person name="Stine O.C."/>
            <person name="Callahan C."/>
            <person name="McInnis M.G."/>
            <person name="Ross C.A."/>
        </authorList>
    </citation>
    <scope>NUCLEOTIDE SEQUENCE [MRNA] OF 428-613</scope>
    <source>
        <tissue>Brain cortex</tissue>
    </source>
</reference>
<reference key="8">
    <citation type="journal article" date="1995" name="Nature">
        <title>A transcriptional co-repressor that interacts with nuclear hormone receptors.</title>
        <authorList>
            <person name="Chen J.D."/>
            <person name="Evans R.M."/>
        </authorList>
    </citation>
    <scope>NUCLEOTIDE SEQUENCE [MRNA] OF 1023-2514</scope>
    <scope>VARIANT THR-1699</scope>
    <source>
        <tissue>Cervix adenocarcinoma</tissue>
    </source>
</reference>
<reference key="9">
    <citation type="journal article" date="2000" name="Genes Dev.">
        <title>A core SMRT corepressor complex containing HDAC3 and TBL1, a WD40-repeat protein linked to deafness.</title>
        <authorList>
            <person name="Guenther M.G."/>
            <person name="Lane W.S."/>
            <person name="Fischle W."/>
            <person name="Verdin E."/>
            <person name="Lazar M.A."/>
            <person name="Shiekhattar R."/>
        </authorList>
    </citation>
    <scope>IDENTIFICATION BY MASS SPECTROMETRY</scope>
    <scope>COMPONENT OF THE N-COR COMPLEX WITH TBL1X AND HDAC3</scope>
</reference>
<reference key="10">
    <citation type="journal article" date="2000" name="EMBO J.">
        <title>Both corepressor proteins SMRT and N-CoR exist in large protein complexes containing HDAC3.</title>
        <authorList>
            <person name="Li J."/>
            <person name="Wang J."/>
            <person name="Wang J."/>
            <person name="Nawaz Z."/>
            <person name="Liu J.M."/>
            <person name="Qin J."/>
            <person name="Wong J."/>
        </authorList>
    </citation>
    <scope>COMPONENT OF THE N-COR COMPLEX WITH TBL1X AND HDAC3</scope>
</reference>
<reference key="11">
    <citation type="journal article" date="2001" name="Genes Dev.">
        <title>Sharp, an inducible cofactor that integrates nuclear receptor repression and activation.</title>
        <authorList>
            <person name="Shi Y."/>
            <person name="Downes M."/>
            <person name="Xie W."/>
            <person name="Kao H.-Y."/>
            <person name="Ordentlich P."/>
            <person name="Tsai C.-C."/>
            <person name="Hon M."/>
            <person name="Evans R.M."/>
        </authorList>
    </citation>
    <scope>INTERACTION WITH MINT</scope>
</reference>
<reference key="12">
    <citation type="journal article" date="2001" name="Mol. Cell. Biol.">
        <title>ETO, a target of t(8;21) in acute leukemia, makes distinct contacts with multiple histone deacetylases and binds mSin3A through its oligomerization domain.</title>
        <authorList>
            <person name="Amann J.M."/>
            <person name="Nip J."/>
            <person name="Strom D.K."/>
            <person name="Lutterbach B."/>
            <person name="Harada H."/>
            <person name="Lenny N."/>
            <person name="Downing J.R."/>
            <person name="Meyers S."/>
            <person name="Hiebert S.W."/>
        </authorList>
    </citation>
    <scope>INTERACTION WITH CBFA2T3</scope>
</reference>
<reference key="13">
    <citation type="journal article" date="2002" name="Mol. Cell">
        <title>The N-CoR-HDAC3 nuclear receptor corepressor complex inhibits the JNK pathway through the integral subunit GPS2.</title>
        <authorList>
            <person name="Zhang J."/>
            <person name="Kalkum M."/>
            <person name="Chait B.T."/>
            <person name="Roeder R.G."/>
        </authorList>
    </citation>
    <scope>COMPONENT OF THE N-COR COMPLEX WITH NCOR1; GPS2; TBL1X; TBL1R AND HDAC3</scope>
</reference>
<reference key="14">
    <citation type="journal article" date="2002" name="J. Biol. Chem.">
        <title>Isolation and characterization of a novel class II histone deacetylase, HDAC10.</title>
        <authorList>
            <person name="Fischer D.D."/>
            <person name="Cai R."/>
            <person name="Bhatia U."/>
            <person name="Asselbergs F.A.M."/>
            <person name="Song C."/>
            <person name="Terry R."/>
            <person name="Trogani N."/>
            <person name="Widmer R."/>
            <person name="Atadja P."/>
            <person name="Cohen D."/>
        </authorList>
    </citation>
    <scope>INTERACTION WITH HDAC10</scope>
</reference>
<reference key="15">
    <citation type="journal article" date="2003" name="Mol. Endocrinol.">
        <title>Retinoic acid receptors beta and gamma do not repress, but instead activate target gene transcription in both the absence and presence of hormone ligand.</title>
        <authorList>
            <person name="Hauksdottir H."/>
            <person name="Farboud B."/>
            <person name="Privalsky M.L."/>
        </authorList>
    </citation>
    <scope>INTERACTION WITH RARB</scope>
</reference>
<reference key="16">
    <citation type="journal article" date="2004" name="Cell">
        <title>MTA3 and the Mi-2/NuRD complex regulate cell fate during B lymphocyte differentiation.</title>
        <authorList>
            <person name="Fujita N."/>
            <person name="Jaye D.L."/>
            <person name="Geigerman C."/>
            <person name="Akyildiz A."/>
            <person name="Mooney M.R."/>
            <person name="Boss J.M."/>
            <person name="Wade P.A."/>
        </authorList>
    </citation>
    <scope>INTERACTION WITH BCL6</scope>
</reference>
<reference key="17">
    <citation type="journal article" date="2005" name="EMBO J.">
        <title>Boat, an AXH domain protein, suppresses the cytotoxicity of mutant ataxin-1.</title>
        <authorList>
            <person name="Mizutani A."/>
            <person name="Wang L."/>
            <person name="Rajan H."/>
            <person name="Vig P.J.S."/>
            <person name="Alaynick W.A."/>
            <person name="Thaler J.P."/>
            <person name="Tsai C.-C."/>
        </authorList>
    </citation>
    <scope>INTERACTION WITH ATXN1L</scope>
</reference>
<reference key="18">
    <citation type="journal article" date="2005" name="J. Biol. Chem.">
        <title>Alternative mRNA splicing of SMRT creates functional diversity by generating corepressor isoforms with different affinities for different nuclear receptors.</title>
        <authorList>
            <person name="Goodson M.L."/>
            <person name="Jonas B.A."/>
            <person name="Privalsky M.L."/>
        </authorList>
    </citation>
    <scope>ALTERNATIVE SPLICING (ISOFORM 4)</scope>
    <scope>FUNCTION (ISOFORM 4)</scope>
</reference>
<reference key="19">
    <citation type="journal article" date="2006" name="Cell">
        <title>Global, in vivo, and site-specific phosphorylation dynamics in signaling networks.</title>
        <authorList>
            <person name="Olsen J.V."/>
            <person name="Blagoev B."/>
            <person name="Gnad F."/>
            <person name="Macek B."/>
            <person name="Kumar C."/>
            <person name="Mortensen P."/>
            <person name="Mann M."/>
        </authorList>
    </citation>
    <scope>PHOSPHORYLATION [LARGE SCALE ANALYSIS] AT SER-149; SER-215; THR-1383; SER-2005 AND SER-2258</scope>
    <scope>IDENTIFICATION BY MASS SPECTROMETRY [LARGE SCALE ANALYSIS]</scope>
    <source>
        <tissue>Cervix carcinoma</tissue>
    </source>
</reference>
<reference key="20">
    <citation type="journal article" date="2008" name="J. Proteome Res.">
        <title>Combining protein-based IMAC, peptide-based IMAC, and MudPIT for efficient phosphoproteomic analysis.</title>
        <authorList>
            <person name="Cantin G.T."/>
            <person name="Yi W."/>
            <person name="Lu B."/>
            <person name="Park S.K."/>
            <person name="Xu T."/>
            <person name="Lee J.-D."/>
            <person name="Yates J.R. III"/>
        </authorList>
    </citation>
    <scope>PHOSPHORYLATION [LARGE SCALE ANALYSIS] AT SER-54</scope>
    <scope>IDENTIFICATION BY MASS SPECTROMETRY [LARGE SCALE ANALYSIS]</scope>
    <source>
        <tissue>Cervix carcinoma</tissue>
    </source>
</reference>
<reference key="21">
    <citation type="journal article" date="2008" name="Mol. Cell. Biol.">
        <title>CtBP is an essential corepressor for BCL6 autoregulation.</title>
        <authorList>
            <person name="Mendez L.M."/>
            <person name="Polo J.M."/>
            <person name="Yu J.J."/>
            <person name="Krupski M."/>
            <person name="Ding B.B."/>
            <person name="Melnick A."/>
            <person name="Ye B.H."/>
        </authorList>
    </citation>
    <scope>FUNCTION AS BCL6 COREPRESSOR</scope>
    <scope>INTERACTION WITH BCL6</scope>
</reference>
<reference key="22">
    <citation type="journal article" date="2008" name="Proc. Natl. Acad. Sci. U.S.A.">
        <title>A quantitative atlas of mitotic phosphorylation.</title>
        <authorList>
            <person name="Dephoure N."/>
            <person name="Zhou C."/>
            <person name="Villen J."/>
            <person name="Beausoleil S.A."/>
            <person name="Bakalarski C.E."/>
            <person name="Elledge S.J."/>
            <person name="Gygi S.P."/>
        </authorList>
    </citation>
    <scope>PHOSPHORYLATION [LARGE SCALE ANALYSIS] AT SER-149; SER-152; THR-156; SER-750; SER-753; SER-1251; THR-1383; SER-1479; SER-2054; THR-2062; SER-2223 AND SER-2258</scope>
    <scope>IDENTIFICATION BY MASS SPECTROMETRY [LARGE SCALE ANALYSIS]</scope>
    <source>
        <tissue>Cervix carcinoma</tissue>
    </source>
</reference>
<reference key="23">
    <citation type="journal article" date="2009" name="Anal. Chem.">
        <title>Lys-N and trypsin cover complementary parts of the phosphoproteome in a refined SCX-based approach.</title>
        <authorList>
            <person name="Gauci S."/>
            <person name="Helbig A.O."/>
            <person name="Slijper M."/>
            <person name="Krijgsveld J."/>
            <person name="Heck A.J."/>
            <person name="Mohammed S."/>
        </authorList>
    </citation>
    <scope>IDENTIFICATION BY MASS SPECTROMETRY [LARGE SCALE ANALYSIS]</scope>
</reference>
<reference key="24">
    <citation type="journal article" date="2009" name="J. Biol. Chem.">
        <title>G protein pathway suppressor 2 (GPS2) is a transcriptional corepressor important for estrogen receptor alpha-mediated transcriptional regulation.</title>
        <authorList>
            <person name="Cheng X."/>
            <person name="Kao H.Y."/>
        </authorList>
    </citation>
    <scope>IDENTIFICATION IN THE N-COR COMPLEX</scope>
</reference>
<reference key="25">
    <citation type="journal article" date="2009" name="Mol. Pharmacol.">
        <title>The basic helix-loop-helix proteins differentiated embryo chondrocyte (DEC) 1 and DEC2 function as corepressors of retinoid X receptors.</title>
        <authorList>
            <person name="Cho Y."/>
            <person name="Noshiro M."/>
            <person name="Choi M."/>
            <person name="Morita K."/>
            <person name="Kawamoto T."/>
            <person name="Fujimoto K."/>
            <person name="Kato Y."/>
            <person name="Makishima M."/>
        </authorList>
    </citation>
    <scope>INTERACTION WITH RXRA</scope>
</reference>
<reference key="26">
    <citation type="journal article" date="2009" name="Sci. Signal.">
        <title>Quantitative phosphoproteomic analysis of T cell receptor signaling reveals system-wide modulation of protein-protein interactions.</title>
        <authorList>
            <person name="Mayya V."/>
            <person name="Lundgren D.H."/>
            <person name="Hwang S.-I."/>
            <person name="Rezaul K."/>
            <person name="Wu L."/>
            <person name="Eng J.K."/>
            <person name="Rodionov V."/>
            <person name="Han D.K."/>
        </authorList>
    </citation>
    <scope>PHOSPHORYLATION [LARGE SCALE ANALYSIS] AT SER-67; SER-149; SER-152; THR-553; SER-554; SER-939; SER-1323; SER-2046; SER-2054; SER-2057; SER-2058; SER-2223 AND SER-2258</scope>
    <scope>IDENTIFICATION BY MASS SPECTROMETRY [LARGE SCALE ANALYSIS]</scope>
    <source>
        <tissue>Leukemic T-cell</tissue>
    </source>
</reference>
<reference key="27">
    <citation type="journal article" date="2009" name="Science">
        <title>Lysine acetylation targets protein complexes and co-regulates major cellular functions.</title>
        <authorList>
            <person name="Choudhary C."/>
            <person name="Kumar C."/>
            <person name="Gnad F."/>
            <person name="Nielsen M.L."/>
            <person name="Rehman M."/>
            <person name="Walther T.C."/>
            <person name="Olsen J.V."/>
            <person name="Mann M."/>
        </authorList>
    </citation>
    <scope>ACETYLATION [LARGE SCALE ANALYSIS] AT LYS-878; LYS-959; LYS-1210; LYS-1240; LYS-1959 AND LYS-2026</scope>
    <scope>IDENTIFICATION BY MASS SPECTROMETRY [LARGE SCALE ANALYSIS]</scope>
</reference>
<reference key="28">
    <citation type="journal article" date="2010" name="Nat. Struct. Mol. Biol.">
        <title>A unique secondary-structure switch controls constitutive gene repression by retinoic acid receptor.</title>
        <authorList>
            <person name="le Maire A."/>
            <person name="Teyssier C."/>
            <person name="Erb C."/>
            <person name="Grimaldi M."/>
            <person name="Alvarez S."/>
            <person name="de Lera A.R."/>
            <person name="Balaguer P."/>
            <person name="Gronemeyer H."/>
            <person name="Royer C.A."/>
            <person name="Germain P."/>
            <person name="Bourguet W."/>
        </authorList>
    </citation>
    <scope>INTERACTION WITH RARA</scope>
    <scope>MUTAGENESIS OF ARG-2128; VAL-2130 AND THR-2131</scope>
</reference>
<reference key="29">
    <citation type="journal article" date="2010" name="Sci. Signal.">
        <title>Quantitative phosphoproteomics reveals widespread full phosphorylation site occupancy during mitosis.</title>
        <authorList>
            <person name="Olsen J.V."/>
            <person name="Vermeulen M."/>
            <person name="Santamaria A."/>
            <person name="Kumar C."/>
            <person name="Miller M.L."/>
            <person name="Jensen L.J."/>
            <person name="Gnad F."/>
            <person name="Cox J."/>
            <person name="Jensen T.S."/>
            <person name="Nigg E.A."/>
            <person name="Brunak S."/>
            <person name="Mann M."/>
        </authorList>
    </citation>
    <scope>PHOSPHORYLATION [LARGE SCALE ANALYSIS] AT SER-149; SER-152; SER-554; SER-956; SER-1861; SER-2203; SER-2223 AND SER-2258</scope>
    <scope>IDENTIFICATION BY MASS SPECTROMETRY [LARGE SCALE ANALYSIS]</scope>
    <source>
        <tissue>Cervix carcinoma</tissue>
    </source>
</reference>
<reference key="30">
    <citation type="journal article" date="2011" name="BMC Syst. Biol.">
        <title>Initial characterization of the human central proteome.</title>
        <authorList>
            <person name="Burkard T.R."/>
            <person name="Planyavsky M."/>
            <person name="Kaupe I."/>
            <person name="Breitwieser F.P."/>
            <person name="Buerckstuemmer T."/>
            <person name="Bennett K.L."/>
            <person name="Superti-Furga G."/>
            <person name="Colinge J."/>
        </authorList>
    </citation>
    <scope>IDENTIFICATION BY MASS SPECTROMETRY [LARGE SCALE ANALYSIS]</scope>
</reference>
<reference key="31">
    <citation type="journal article" date="2011" name="Cell. Mol. Life Sci.">
        <title>FBI-1 functions as a novel AR co-repressor in prostate cancer cells.</title>
        <authorList>
            <person name="Cui J."/>
            <person name="Yang Y."/>
            <person name="Zhang C."/>
            <person name="Hu P."/>
            <person name="Kan W."/>
            <person name="Bai X."/>
            <person name="Liu X."/>
            <person name="Song H."/>
        </authorList>
    </citation>
    <scope>FUNCTION</scope>
    <scope>INTERACTION WITH AR AND ZBTB7A</scope>
</reference>
<reference key="32">
    <citation type="journal article" date="2011" name="Sci. Signal.">
        <title>System-wide temporal characterization of the proteome and phosphoproteome of human embryonic stem cell differentiation.</title>
        <authorList>
            <person name="Rigbolt K.T."/>
            <person name="Prokhorova T.A."/>
            <person name="Akimov V."/>
            <person name="Henningsen J."/>
            <person name="Johansen P.T."/>
            <person name="Kratchmarova I."/>
            <person name="Kassem M."/>
            <person name="Mann M."/>
            <person name="Olsen J.V."/>
            <person name="Blagoev B."/>
        </authorList>
    </citation>
    <scope>PHOSPHORYLATION [LARGE SCALE ANALYSIS] AT SER-149; SER-152; SER-956; SER-1778 AND SER-2258</scope>
    <scope>IDENTIFICATION BY MASS SPECTROMETRY [LARGE SCALE ANALYSIS]</scope>
</reference>
<reference key="33">
    <citation type="journal article" date="2013" name="Cell Rep.">
        <title>A hybrid mechanism of action for BCL6 in B cells defined by formation of functionally distinct complexes at enhancers and promoters.</title>
        <authorList>
            <person name="Hatzi K."/>
            <person name="Jiang Y."/>
            <person name="Huang C."/>
            <person name="Garrett-Bakelman F."/>
            <person name="Gearhart M.D."/>
            <person name="Giannopoulou E.G."/>
            <person name="Zumbo P."/>
            <person name="Kirouac K."/>
            <person name="Bhaskara S."/>
            <person name="Polo J.M."/>
            <person name="Kormaksson M."/>
            <person name="Mackerell A.D. Jr."/>
            <person name="Xue F."/>
            <person name="Mason C.E."/>
            <person name="Hiebert S.W."/>
            <person name="Prive G.G."/>
            <person name="Cerchietti L."/>
            <person name="Bardwell V.J."/>
            <person name="Elemento O."/>
            <person name="Melnick A."/>
        </authorList>
    </citation>
    <scope>FUNCTION AS BCL6 COREPRESSOR</scope>
    <scope>INTERACTION WITH BCL6 AND HDAC3</scope>
    <scope>IDENTIFICATION IN A COMPLEX WITH BCL6 AND BCOR</scope>
</reference>
<reference key="34">
    <citation type="journal article" date="2013" name="J. Proteome Res.">
        <title>Toward a comprehensive characterization of a human cancer cell phosphoproteome.</title>
        <authorList>
            <person name="Zhou H."/>
            <person name="Di Palma S."/>
            <person name="Preisinger C."/>
            <person name="Peng M."/>
            <person name="Polat A.N."/>
            <person name="Heck A.J."/>
            <person name="Mohammed S."/>
        </authorList>
    </citation>
    <scope>PHOSPHORYLATION [LARGE SCALE ANALYSIS] AT SER-54; SER-67; SER-215; SER-493; SER-939; THR-946; SER-956; SER-1173; SER-1251; SER-1323; THR-1383; SER-1479; SER-1539; SER-1619; SER-1775; SER-1778; SER-2054; SER-2077; SER-2223; SER-2258 AND SER-2413</scope>
    <scope>IDENTIFICATION BY MASS SPECTROMETRY [LARGE SCALE ANALYSIS]</scope>
    <source>
        <tissue>Cervix carcinoma</tissue>
        <tissue>Erythroleukemia</tissue>
    </source>
</reference>
<reference key="35">
    <citation type="journal article" date="2013" name="PLoS ONE">
        <title>Structural and functional analysis of the DEAF-1 and BS69 MYND domains.</title>
        <authorList>
            <person name="Kateb F."/>
            <person name="Perrin H."/>
            <person name="Tripsianes K."/>
            <person name="Zou P."/>
            <person name="Spadaccini R."/>
            <person name="Bottomley M."/>
            <person name="Franzmann T.M."/>
            <person name="Buchner J."/>
            <person name="Ansieau S."/>
            <person name="Sattler M."/>
        </authorList>
    </citation>
    <scope>INTERACTION WITH DEAF1</scope>
</reference>
<reference key="36">
    <citation type="journal article" date="2014" name="J. Proteomics">
        <title>An enzyme assisted RP-RPLC approach for in-depth analysis of human liver phosphoproteome.</title>
        <authorList>
            <person name="Bian Y."/>
            <person name="Song C."/>
            <person name="Cheng K."/>
            <person name="Dong M."/>
            <person name="Wang F."/>
            <person name="Huang J."/>
            <person name="Sun D."/>
            <person name="Wang L."/>
            <person name="Ye M."/>
            <person name="Zou H."/>
        </authorList>
    </citation>
    <scope>PHOSPHORYLATION [LARGE SCALE ANALYSIS] AT SER-149; SER-152; SER-215; SER-956; SER-2005; SER-2054 AND THR-2062</scope>
    <scope>IDENTIFICATION BY MASS SPECTROMETRY [LARGE SCALE ANALYSIS]</scope>
    <source>
        <tissue>Liver</tissue>
    </source>
</reference>
<reference key="37">
    <citation type="journal article" date="2014" name="Mol. Cell. Proteomics">
        <title>Immunoaffinity enrichment and mass spectrometry analysis of protein methylation.</title>
        <authorList>
            <person name="Guo A."/>
            <person name="Gu H."/>
            <person name="Zhou J."/>
            <person name="Mulhern D."/>
            <person name="Wang Y."/>
            <person name="Lee K.A."/>
            <person name="Yang V."/>
            <person name="Aguiar M."/>
            <person name="Kornhauser J."/>
            <person name="Jia X."/>
            <person name="Ren J."/>
            <person name="Beausoleil S.A."/>
            <person name="Silva J.C."/>
            <person name="Vemulapalli V."/>
            <person name="Bedford M.T."/>
            <person name="Comb M.J."/>
        </authorList>
    </citation>
    <scope>METHYLATION [LARGE SCALE ANALYSIS] AT ARG-1653</scope>
    <scope>IDENTIFICATION BY MASS SPECTROMETRY [LARGE SCALE ANALYSIS]</scope>
    <source>
        <tissue>Colon carcinoma</tissue>
    </source>
</reference>
<reference key="38">
    <citation type="journal article" date="2017" name="Nat. Struct. Mol. Biol.">
        <title>Site-specific mapping of the human SUMO proteome reveals co-modification with phosphorylation.</title>
        <authorList>
            <person name="Hendriks I.A."/>
            <person name="Lyon D."/>
            <person name="Young C."/>
            <person name="Jensen L.J."/>
            <person name="Vertegaal A.C."/>
            <person name="Nielsen M.L."/>
        </authorList>
    </citation>
    <scope>SUMOYLATION [LARGE SCALE ANALYSIS] AT LYS-1168</scope>
    <scope>IDENTIFICATION BY MASS SPECTROMETRY [LARGE SCALE ANALYSIS]</scope>
</reference>
<reference key="39">
    <citation type="journal article" date="2019" name="Eur. J. Hum. Genet.">
        <title>TBL1Y: a new gene involved in syndromic hearing loss.</title>
        <authorList>
            <person name="Di Stazio M."/>
            <person name="Collesi C."/>
            <person name="Vozzi D."/>
            <person name="Liu W."/>
            <person name="Myers M."/>
            <person name="Morgan A."/>
            <person name="D Adamo P.A."/>
            <person name="Girotto G."/>
            <person name="Rubinato E."/>
            <person name="Giacca M."/>
            <person name="Gasparini P."/>
        </authorList>
    </citation>
    <scope>INTERACTION WITH TBL1Y</scope>
</reference>
<reference key="40">
    <citation type="journal article" date="2003" name="Mol. Cell">
        <title>Mechanism of SMRT corepressor recruitment by the BCL6 BTB domain.</title>
        <authorList>
            <person name="Ahmad K.F."/>
            <person name="Melnick A."/>
            <person name="Lax S."/>
            <person name="Bouchard D."/>
            <person name="Liu J."/>
            <person name="Kiang C.L."/>
            <person name="Mayer S."/>
            <person name="Takahashi S."/>
            <person name="Licht J.D."/>
            <person name="Prive G.G."/>
        </authorList>
    </citation>
    <scope>X-RAY CRYSTALLOGRAPHY (2.2 ANGSTROMS) OF 1414-1430 IN COMPLEX WITH BL6</scope>
</reference>
<reference evidence="40" key="41">
    <citation type="journal article" date="2011" name="Nat. Struct. Mol. Biol.">
        <title>Structural basis for the assembly of the SMRT/NCoR core transcriptional repression machinery.</title>
        <authorList>
            <person name="Oberoi J."/>
            <person name="Fairall L."/>
            <person name="Watson P.J."/>
            <person name="Yang J.C."/>
            <person name="Czimmerer Z."/>
            <person name="Kampmann T."/>
            <person name="Goult B.T."/>
            <person name="Greenwood J.A."/>
            <person name="Gooch J.T."/>
            <person name="Kallenberger B.C."/>
            <person name="Nagy L."/>
            <person name="Neuhaus D."/>
            <person name="Schwabe J.W."/>
        </authorList>
    </citation>
    <scope>STRUCTURE BY NMR OF 167-207</scope>
    <scope>IDENTIFICATION IN THE N-COR COMPLEX</scope>
    <scope>MUTAGENESIS OF 242-HIS--LEU-245</scope>
</reference>
<reference evidence="41" key="42">
    <citation type="journal article" date="2012" name="Nature">
        <title>Structure of HDAC3 bound to co-repressor and inositol tetraphosphate.</title>
        <authorList>
            <person name="Watson P.J."/>
            <person name="Fairall L."/>
            <person name="Santos G.M."/>
            <person name="Schwabe J.W."/>
        </authorList>
    </citation>
    <scope>X-RAY CRYSTALLOGRAPHY (2.06 ANGSTROMS) OF 389-480 IN COMPLEX WITH HDAC3 AND INOSITOL</scope>
    <scope>FUNCTION</scope>
    <scope>DOMAIN</scope>
    <scope>INTERACTION WITH HDAC3</scope>
</reference>
<comment type="function">
    <text evidence="6 7 19 23 25 27">Transcriptional corepressor that mediates the transcriptional repression activity of some nuclear receptors by promoting chromatin condensation, thus preventing access of the basal transcription (PubMed:10077563, PubMed:10097068, PubMed:18212045, PubMed:20812024, PubMed:22230954, PubMed:23911289). Acts by recruiting chromatin modifiers, such as histone deacetylases HDAC1, HDAC2 and HDAC3 (PubMed:22230954). Required to activate the histone deacetylase activity of HDAC3 (PubMed:22230954). Involved in the regulation BCL6-dependent of the germinal center (GC) reactions, mainly through the control of the GC B-cells proliferation and survival (PubMed:18212045, PubMed:23911289). Recruited by ZBTB7A to the androgen response elements/ARE on target genes, negatively regulates androgen receptor signaling and androgen-induced cell proliferation (PubMed:20812024).</text>
</comment>
<comment type="function">
    <molecule>Isoform 1</molecule>
    <text evidence="17">Isoform 1 and isoform 4 have different affinities for different nuclear receptors.</text>
</comment>
<comment type="function">
    <molecule>Isoform 4</molecule>
    <text evidence="17">Isoform 1 and isoform 4 have different affinities for different nuclear receptors.</text>
</comment>
<comment type="subunit">
    <text evidence="2 8 9 10 11 12 13 14 15 16 18 19 20 21 22 23 24 25 26 27 28">Forms a large corepressor complex that contains SIN3A/B and histone deacetylases HDAC1 and HDAC2. This complex associates with the thyroid (TR) and the retinoid acid receptors (RAR) in the absence of ligand, and may stabilize their interaction with TFIIB. Interacts directly with RARA in the absence of ligand; the interaction represses RARA activity. Interacts (isoform SMRT) with HDAC10. Interacts with MINT. Component of the N-Cor repressor complex, at least composed of NCOR1, NCOR2, HDAC3, TBL1X, TBL1R, CORO2A and GPS2 (PubMed:10809664, PubMed:10944117, PubMed:11931768, PubMed:19858209, PubMed:21240272). Interacts with CBFA2T3 and ATXN1L. Interacts with RARB; the interaction is weak and does not repress RARB transactivational activity. Interacts (via 1D-myo-inositol 1,4,5,6-tetrakisphosphate) with HDAC3; promoting the histone deacetylase activity of HDAC3 (PubMed:22230954). Interacts with HDAC7 and C1D. Interacts with NR4A2; this interaction increases in the absence of PITX3. Interacts with BCL6 (via the BTB domain), required for BCL6 transcriptional repressor activity on a subset of target genes. Forms ternary complexes with BCOR and BCL6 on target gene promoters but, on enhancer elements, interacts with BCL6 and HDAC3 to repress proximal gene expression. May interact with DEAF1. Interacts with RXRA. Interacts with MECP2 (By similarity). Interacts with ZBTB7A (PubMed:20812024). Interacts with AR (PubMed:20812024). Interacts with TBL1Y (PubMed:30341416). Interacts with SANBR (via the BTB domain) (By similarity).</text>
</comment>
<comment type="interaction">
    <interactant intactId="EBI-80830">
        <id>Q9Y618</id>
    </interactant>
    <interactant intactId="EBI-80780">
        <id>P35869</id>
        <label>AHR</label>
    </interactant>
    <organismsDiffer>false</organismsDiffer>
    <experiments>2</experiments>
</comment>
<comment type="interaction">
    <interactant intactId="EBI-80830">
        <id>Q9Y618</id>
    </interactant>
    <interactant intactId="EBI-80809">
        <id>P27540</id>
        <label>ARNT</label>
    </interactant>
    <organismsDiffer>false</organismsDiffer>
    <experiments>2</experiments>
</comment>
<comment type="interaction">
    <interactant intactId="EBI-80830">
        <id>Q9Y618</id>
    </interactant>
    <interactant intactId="EBI-448924">
        <id>Q01094</id>
        <label>E2F1</label>
    </interactant>
    <organismsDiffer>false</organismsDiffer>
    <experiments>2</experiments>
</comment>
<comment type="interaction">
    <interactant intactId="EBI-80830">
        <id>Q9Y618</id>
    </interactant>
    <interactant intactId="EBI-713355">
        <id>Q13227</id>
        <label>GPS2</label>
    </interactant>
    <organismsDiffer>false</organismsDiffer>
    <experiments>6</experiments>
</comment>
<comment type="interaction">
    <interactant intactId="EBI-80830">
        <id>Q9Y618</id>
    </interactant>
    <interactant intactId="EBI-301834">
        <id>Q13547</id>
        <label>HDAC1</label>
    </interactant>
    <organismsDiffer>false</organismsDiffer>
    <experiments>2</experiments>
</comment>
<comment type="interaction">
    <interactant intactId="EBI-80830">
        <id>Q9Y618</id>
    </interactant>
    <interactant intactId="EBI-607682">
        <id>O15379</id>
        <label>HDAC3</label>
    </interactant>
    <organismsDiffer>false</organismsDiffer>
    <experiments>14</experiments>
</comment>
<comment type="interaction">
    <interactant intactId="EBI-80830">
        <id>Q9Y618</id>
    </interactant>
    <interactant intactId="EBI-396343">
        <id>O00629</id>
        <label>KPNA4</label>
    </interactant>
    <organismsDiffer>false</organismsDiffer>
    <experiments>32</experiments>
</comment>
<comment type="interaction">
    <interactant intactId="EBI-80830">
        <id>Q9Y618</id>
    </interactant>
    <interactant intactId="EBI-867256">
        <id>Q15156</id>
        <label>PML-RAR</label>
    </interactant>
    <organismsDiffer>false</organismsDiffer>
    <experiments>2</experiments>
</comment>
<comment type="interaction">
    <interactant intactId="EBI-80830">
        <id>Q9Y618</id>
    </interactant>
    <interactant intactId="EBI-413374">
        <id>P10276</id>
        <label>RARA</label>
    </interactant>
    <organismsDiffer>false</organismsDiffer>
    <experiments>4</experiments>
</comment>
<comment type="interaction">
    <interactant intactId="EBI-80830">
        <id>Q9Y618</id>
    </interactant>
    <interactant intactId="EBI-632552">
        <id>Q06330</id>
        <label>RBPJ</label>
    </interactant>
    <organismsDiffer>false</organismsDiffer>
    <experiments>3</experiments>
</comment>
<comment type="interaction">
    <interactant intactId="EBI-80830">
        <id>Q9Y618</id>
    </interactant>
    <interactant intactId="EBI-632715">
        <id>Q13573</id>
        <label>SNW1</label>
    </interactant>
    <organismsDiffer>false</organismsDiffer>
    <experiments>4</experiments>
</comment>
<comment type="interaction">
    <interactant intactId="EBI-80830">
        <id>Q9Y618</id>
    </interactant>
    <interactant intactId="EBI-765739">
        <id>Q96T58</id>
        <label>SPEN</label>
    </interactant>
    <organismsDiffer>false</organismsDiffer>
    <experiments>5</experiments>
</comment>
<comment type="interaction">
    <interactant intactId="EBI-80830">
        <id>Q9Y618</id>
    </interactant>
    <interactant intactId="EBI-15904933">
        <id>O60907-2</id>
        <label>TBL1X</label>
    </interactant>
    <organismsDiffer>false</organismsDiffer>
    <experiments>7</experiments>
</comment>
<comment type="interaction">
    <interactant intactId="EBI-80830">
        <id>Q9Y618</id>
    </interactant>
    <interactant intactId="EBI-3955784">
        <id>P10828-1</id>
        <label>THRB</label>
    </interactant>
    <organismsDiffer>false</organismsDiffer>
    <experiments>3</experiments>
</comment>
<comment type="interaction">
    <interactant intactId="EBI-80830">
        <id>Q9Y618</id>
    </interactant>
    <interactant intactId="EBI-366083">
        <id>P04637</id>
        <label>TP53</label>
    </interactant>
    <organismsDiffer>false</organismsDiffer>
    <experiments>7</experiments>
</comment>
<comment type="interaction">
    <interactant intactId="EBI-80830">
        <id>Q9Y618</id>
    </interactant>
    <interactant intactId="EBI-445922">
        <id>O88513</id>
        <label>Gmnn</label>
    </interactant>
    <organismsDiffer>true</organismsDiffer>
    <experiments>3</experiments>
</comment>
<comment type="subcellular location">
    <subcellularLocation>
        <location evidence="7">Nucleus</location>
    </subcellularLocation>
</comment>
<comment type="alternative products">
    <event type="alternative splicing"/>
    <isoform>
        <id>Q9Y618-1</id>
        <name>1</name>
        <name evidence="34">SMRT-alpha</name>
        <name>TRAC-2</name>
        <name>h-SMRT</name>
        <sequence type="displayed"/>
    </isoform>
    <isoform>
        <id>Q9Y618-2</id>
        <name>2</name>
        <name>TRAC-1</name>
        <sequence type="described" ref="VSP_003412 VSP_003413"/>
    </isoform>
    <isoform>
        <id>Q9Y618-4</id>
        <name>3</name>
        <name evidence="33">SMRTe</name>
        <sequence type="described" ref="VSP_036595"/>
    </isoform>
    <isoform>
        <id>Q9Y618-5</id>
        <name>4</name>
        <name evidence="34">SMRT-tau</name>
        <sequence type="described" ref="VSP_036595 VSP_003413"/>
    </isoform>
</comment>
<comment type="tissue specificity">
    <text evidence="6">Ubiquitous (PubMed:10077563). High levels of expression are detected in lung, spleen and brain (PubMed:10077563).</text>
</comment>
<comment type="induction">
    <text>Regulated during cell cycle progression.</text>
</comment>
<comment type="domain">
    <text evidence="24">The N-terminal region contains repression functions that are divided into three independent repression domains (RD1, RD2 and RD3). The C-terminal region contains the nuclear receptor-interacting domains that are divided in two separate interaction domains (ID1 and ID2).</text>
</comment>
<comment type="domain">
    <text evidence="1">The two interaction domains (ID) contain a conserved sequence referred to as the CORNR box. This motif is required and sufficient to permit binding to unligated TR and RARS. Sequences flanking the CORNR box determine nuclear hormone receptor specificity.</text>
</comment>
<comment type="domain">
    <text evidence="25">The deacetylase activation domain (DAD) promotes the recruitment and activation of HDAC3 (PubMed:22230954). Inositol tetraphosphate (1D-myo-inositol 1,4,5,6-tetrakisphosphate) acts as an intermolecular glue between HDAC3 and NCOR2 (PubMed:22230954).</text>
</comment>
<comment type="miscellaneous">
    <molecule>Isoform 2</molecule>
    <text evidence="38">Contains only the C-terminal receptor-interacting domain and acts as an antirepressor.</text>
</comment>
<comment type="similarity">
    <text evidence="38">Belongs to the N-CoR nuclear receptor corepressors family.</text>
</comment>
<comment type="sequence caution" evidence="38">
    <conflict type="erroneous translation">
        <sequence resource="EMBL-CDS" id="AAB91452"/>
    </conflict>
    <text>Wrong choice of CDS.</text>
</comment>
<comment type="sequence caution" evidence="38">
    <conflict type="miscellaneous discrepancy">
        <sequence resource="EMBL-CDS" id="AAC50236"/>
    </conflict>
    <text>Contaminating sequence. Sequence of unknown origin in the N-terminal part.</text>
</comment>
<comment type="sequence caution" evidence="38">
    <conflict type="frameshift">
        <sequence resource="EMBL-CDS" id="AAD20946"/>
    </conflict>
</comment>
<comment type="sequence caution" evidence="38">
    <conflict type="erroneous initiation">
        <sequence resource="EMBL-CDS" id="BAD92326"/>
    </conflict>
    <text>Extended N-terminus.</text>
</comment>
<keyword id="KW-0002">3D-structure</keyword>
<keyword id="KW-0007">Acetylation</keyword>
<keyword id="KW-0025">Alternative splicing</keyword>
<keyword id="KW-0175">Coiled coil</keyword>
<keyword id="KW-0238">DNA-binding</keyword>
<keyword id="KW-1017">Isopeptide bond</keyword>
<keyword id="KW-0488">Methylation</keyword>
<keyword id="KW-0539">Nucleus</keyword>
<keyword id="KW-0597">Phosphoprotein</keyword>
<keyword id="KW-1267">Proteomics identification</keyword>
<keyword id="KW-1185">Reference proteome</keyword>
<keyword id="KW-0677">Repeat</keyword>
<keyword id="KW-0678">Repressor</keyword>
<keyword id="KW-0804">Transcription</keyword>
<keyword id="KW-0805">Transcription regulation</keyword>
<keyword id="KW-0832">Ubl conjugation</keyword>
<organism>
    <name type="scientific">Homo sapiens</name>
    <name type="common">Human</name>
    <dbReference type="NCBI Taxonomy" id="9606"/>
    <lineage>
        <taxon>Eukaryota</taxon>
        <taxon>Metazoa</taxon>
        <taxon>Chordata</taxon>
        <taxon>Craniata</taxon>
        <taxon>Vertebrata</taxon>
        <taxon>Euteleostomi</taxon>
        <taxon>Mammalia</taxon>
        <taxon>Eutheria</taxon>
        <taxon>Euarchontoglires</taxon>
        <taxon>Primates</taxon>
        <taxon>Haplorrhini</taxon>
        <taxon>Catarrhini</taxon>
        <taxon>Hominidae</taxon>
        <taxon>Homo</taxon>
    </lineage>
</organism>
<proteinExistence type="evidence at protein level"/>
<dbReference type="EMBL" id="S83390">
    <property type="protein sequence ID" value="AAB50847.1"/>
    <property type="molecule type" value="mRNA"/>
</dbReference>
<dbReference type="EMBL" id="AF113003">
    <property type="protein sequence ID" value="AAD20946.1"/>
    <property type="status" value="ALT_FRAME"/>
    <property type="molecule type" value="mRNA"/>
</dbReference>
<dbReference type="EMBL" id="AF125672">
    <property type="protein sequence ID" value="AAD22973.1"/>
    <property type="molecule type" value="mRNA"/>
</dbReference>
<dbReference type="EMBL" id="AY965853">
    <property type="protein sequence ID" value="AAX77219.1"/>
    <property type="molecule type" value="mRNA"/>
</dbReference>
<dbReference type="EMBL" id="AC069261">
    <property type="status" value="NOT_ANNOTATED_CDS"/>
    <property type="molecule type" value="Genomic_DNA"/>
</dbReference>
<dbReference type="EMBL" id="AC073916">
    <property type="status" value="NOT_ANNOTATED_CDS"/>
    <property type="molecule type" value="Genomic_DNA"/>
</dbReference>
<dbReference type="EMBL" id="AB209089">
    <property type="protein sequence ID" value="BAD92326.1"/>
    <property type="status" value="ALT_INIT"/>
    <property type="molecule type" value="mRNA"/>
</dbReference>
<dbReference type="EMBL" id="U80750">
    <property type="protein sequence ID" value="AAB91446.1"/>
    <property type="molecule type" value="mRNA"/>
</dbReference>
<dbReference type="EMBL" id="U80761">
    <property type="protein sequence ID" value="AAB91452.1"/>
    <property type="status" value="ALT_SEQ"/>
    <property type="molecule type" value="mRNA"/>
</dbReference>
<dbReference type="EMBL" id="U37146">
    <property type="protein sequence ID" value="AAC50236.1"/>
    <property type="status" value="ALT_SEQ"/>
    <property type="molecule type" value="mRNA"/>
</dbReference>
<dbReference type="CCDS" id="CCDS41858.2">
    <molecule id="Q9Y618-1"/>
</dbReference>
<dbReference type="PIR" id="S60255">
    <property type="entry name" value="S60255"/>
</dbReference>
<dbReference type="RefSeq" id="NP_001070729.2">
    <property type="nucleotide sequence ID" value="NM_001077261.3"/>
</dbReference>
<dbReference type="RefSeq" id="NP_001193583.1">
    <property type="nucleotide sequence ID" value="NM_001206654.1"/>
</dbReference>
<dbReference type="RefSeq" id="NP_006303.4">
    <molecule id="Q9Y618-1"/>
    <property type="nucleotide sequence ID" value="NM_006312.6"/>
</dbReference>
<dbReference type="PDB" id="1KKQ">
    <property type="method" value="X-ray"/>
    <property type="resolution" value="3.00 A"/>
    <property type="chains" value="E/F/G/H=2336-2354"/>
</dbReference>
<dbReference type="PDB" id="1R2B">
    <property type="method" value="X-ray"/>
    <property type="resolution" value="2.20 A"/>
    <property type="chains" value="C/D=1414-1430"/>
</dbReference>
<dbReference type="PDB" id="1XC5">
    <property type="method" value="NMR"/>
    <property type="chains" value="A=412-480"/>
</dbReference>
<dbReference type="PDB" id="2GPV">
    <property type="method" value="X-ray"/>
    <property type="resolution" value="2.85 A"/>
    <property type="chains" value="G/H/I=2335-2356"/>
</dbReference>
<dbReference type="PDB" id="2L5G">
    <property type="method" value="NMR"/>
    <property type="chains" value="B=167-207"/>
</dbReference>
<dbReference type="PDB" id="2LTP">
    <property type="method" value="NMR"/>
    <property type="chains" value="A=615-685"/>
</dbReference>
<dbReference type="PDB" id="2ODD">
    <property type="method" value="NMR"/>
    <property type="chains" value="B=1101-1113"/>
</dbReference>
<dbReference type="PDB" id="2RT5">
    <property type="method" value="NMR"/>
    <property type="chains" value="B=2507-2514"/>
</dbReference>
<dbReference type="PDB" id="3R29">
    <property type="method" value="X-ray"/>
    <property type="resolution" value="2.90 A"/>
    <property type="chains" value="C/D=2335-2350"/>
</dbReference>
<dbReference type="PDB" id="3R2A">
    <property type="method" value="X-ray"/>
    <property type="resolution" value="3.00 A"/>
    <property type="chains" value="E/F=2335-2350"/>
</dbReference>
<dbReference type="PDB" id="4A69">
    <property type="method" value="X-ray"/>
    <property type="resolution" value="2.06 A"/>
    <property type="chains" value="C/D=389-480"/>
</dbReference>
<dbReference type="PDB" id="4OAR">
    <property type="method" value="X-ray"/>
    <property type="resolution" value="2.41 A"/>
    <property type="chains" value="B=2335-2351"/>
</dbReference>
<dbReference type="PDB" id="5X8Q">
    <property type="method" value="X-ray"/>
    <property type="resolution" value="2.20 A"/>
    <property type="chains" value="B/D/F/H=2335-2356"/>
</dbReference>
<dbReference type="PDB" id="5X8X">
    <property type="method" value="X-ray"/>
    <property type="resolution" value="2.60 A"/>
    <property type="chains" value="B/D/F/H=2335-2356"/>
</dbReference>
<dbReference type="PDB" id="5ZOO">
    <property type="method" value="X-ray"/>
    <property type="resolution" value="1.85 A"/>
    <property type="chains" value="A=1350-1363"/>
</dbReference>
<dbReference type="PDB" id="5ZOP">
    <property type="method" value="X-ray"/>
    <property type="resolution" value="2.70 A"/>
    <property type="chains" value="A=1448-1459"/>
</dbReference>
<dbReference type="PDB" id="6A22">
    <property type="method" value="X-ray"/>
    <property type="resolution" value="2.55 A"/>
    <property type="chains" value="B/D/F/H=2335-2356"/>
</dbReference>
<dbReference type="PDB" id="6IVX">
    <property type="method" value="X-ray"/>
    <property type="resolution" value="2.35 A"/>
    <property type="chains" value="B/D/F/H=2335-2356"/>
</dbReference>
<dbReference type="PDB" id="6PDZ">
    <property type="method" value="X-ray"/>
    <property type="resolution" value="2.10 A"/>
    <property type="chains" value="C/D=2335-2356"/>
</dbReference>
<dbReference type="PDB" id="7SQA">
    <property type="method" value="X-ray"/>
    <property type="resolution" value="2.50 A"/>
    <property type="chains" value="C/D=2335-2356"/>
</dbReference>
<dbReference type="PDB" id="8AQM">
    <property type="method" value="X-ray"/>
    <property type="resolution" value="2.30 A"/>
    <property type="chains" value="C/D=2332-2354"/>
</dbReference>
<dbReference type="PDB" id="8AQN">
    <property type="method" value="X-ray"/>
    <property type="resolution" value="1.90 A"/>
    <property type="chains" value="C/D=2332-2354"/>
</dbReference>
<dbReference type="PDB" id="8B8W">
    <property type="method" value="X-ray"/>
    <property type="resolution" value="1.86 A"/>
    <property type="chains" value="C/D=2332-2354"/>
</dbReference>
<dbReference type="PDB" id="8B8X">
    <property type="method" value="X-ray"/>
    <property type="resolution" value="1.78 A"/>
    <property type="chains" value="C/D=2332-2354"/>
</dbReference>
<dbReference type="PDB" id="8B8Y">
    <property type="method" value="X-ray"/>
    <property type="resolution" value="2.00 A"/>
    <property type="chains" value="C/D=2332-2354"/>
</dbReference>
<dbReference type="PDB" id="8B8Z">
    <property type="method" value="X-ray"/>
    <property type="resolution" value="2.22 A"/>
    <property type="chains" value="C/D=2332-2354"/>
</dbReference>
<dbReference type="PDB" id="8B90">
    <property type="method" value="X-ray"/>
    <property type="resolution" value="2.10 A"/>
    <property type="chains" value="C/D=2332-2354"/>
</dbReference>
<dbReference type="PDB" id="8B91">
    <property type="method" value="X-ray"/>
    <property type="resolution" value="2.23 A"/>
    <property type="chains" value="C/D=2332-2354"/>
</dbReference>
<dbReference type="PDB" id="8B92">
    <property type="method" value="X-ray"/>
    <property type="resolution" value="1.66 A"/>
    <property type="chains" value="C/D=2332-2354"/>
</dbReference>
<dbReference type="PDB" id="8B93">
    <property type="method" value="X-ray"/>
    <property type="resolution" value="2.21 A"/>
    <property type="chains" value="C/D=2332-2354"/>
</dbReference>
<dbReference type="PDB" id="8B94">
    <property type="method" value="X-ray"/>
    <property type="resolution" value="1.55 A"/>
    <property type="chains" value="C/D=2332-2354"/>
</dbReference>
<dbReference type="PDB" id="8B95">
    <property type="method" value="X-ray"/>
    <property type="resolution" value="1.72 A"/>
    <property type="chains" value="C/D=2332-2354"/>
</dbReference>
<dbReference type="PDB" id="8X7E">
    <property type="method" value="X-ray"/>
    <property type="resolution" value="2.30 A"/>
    <property type="chains" value="B/D/F/H=2335-2356"/>
</dbReference>
<dbReference type="PDBsum" id="1KKQ"/>
<dbReference type="PDBsum" id="1R2B"/>
<dbReference type="PDBsum" id="1XC5"/>
<dbReference type="PDBsum" id="2GPV"/>
<dbReference type="PDBsum" id="2L5G"/>
<dbReference type="PDBsum" id="2LTP"/>
<dbReference type="PDBsum" id="2ODD"/>
<dbReference type="PDBsum" id="2RT5"/>
<dbReference type="PDBsum" id="3R29"/>
<dbReference type="PDBsum" id="3R2A"/>
<dbReference type="PDBsum" id="4A69"/>
<dbReference type="PDBsum" id="4OAR"/>
<dbReference type="PDBsum" id="5X8Q"/>
<dbReference type="PDBsum" id="5X8X"/>
<dbReference type="PDBsum" id="5ZOO"/>
<dbReference type="PDBsum" id="5ZOP"/>
<dbReference type="PDBsum" id="6A22"/>
<dbReference type="PDBsum" id="6IVX"/>
<dbReference type="PDBsum" id="6PDZ"/>
<dbReference type="PDBsum" id="7SQA"/>
<dbReference type="PDBsum" id="8AQM"/>
<dbReference type="PDBsum" id="8AQN"/>
<dbReference type="PDBsum" id="8B8W"/>
<dbReference type="PDBsum" id="8B8X"/>
<dbReference type="PDBsum" id="8B8Y"/>
<dbReference type="PDBsum" id="8B8Z"/>
<dbReference type="PDBsum" id="8B90"/>
<dbReference type="PDBsum" id="8B91"/>
<dbReference type="PDBsum" id="8B92"/>
<dbReference type="PDBsum" id="8B93"/>
<dbReference type="PDBsum" id="8B94"/>
<dbReference type="PDBsum" id="8B95"/>
<dbReference type="PDBsum" id="8X7E"/>
<dbReference type="BMRB" id="Q9Y618"/>
<dbReference type="SMR" id="Q9Y618"/>
<dbReference type="BioGRID" id="114974">
    <property type="interactions" value="259"/>
</dbReference>
<dbReference type="CORUM" id="Q9Y618"/>
<dbReference type="DIP" id="DIP-951N"/>
<dbReference type="ELM" id="Q9Y618"/>
<dbReference type="FunCoup" id="Q9Y618">
    <property type="interactions" value="1965"/>
</dbReference>
<dbReference type="IntAct" id="Q9Y618">
    <property type="interactions" value="139"/>
</dbReference>
<dbReference type="MINT" id="Q9Y618"/>
<dbReference type="STRING" id="9606.ENSP00000384018"/>
<dbReference type="BindingDB" id="Q9Y618"/>
<dbReference type="ChEMBL" id="CHEMBL5949"/>
<dbReference type="DrugCentral" id="Q9Y618"/>
<dbReference type="GlyCosmos" id="Q9Y618">
    <property type="glycosylation" value="20 sites, 1 glycan"/>
</dbReference>
<dbReference type="GlyGen" id="Q9Y618">
    <property type="glycosylation" value="39 sites, 1 O-linked glycan (34 sites)"/>
</dbReference>
<dbReference type="iPTMnet" id="Q9Y618"/>
<dbReference type="MetOSite" id="Q9Y618"/>
<dbReference type="PhosphoSitePlus" id="Q9Y618"/>
<dbReference type="BioMuta" id="NCOR2"/>
<dbReference type="DMDM" id="226713806"/>
<dbReference type="jPOST" id="Q9Y618"/>
<dbReference type="MassIVE" id="Q9Y618"/>
<dbReference type="PaxDb" id="9606-ENSP00000384018"/>
<dbReference type="PeptideAtlas" id="Q9Y618"/>
<dbReference type="ProteomicsDB" id="86582">
    <molecule id="Q9Y618-1"/>
</dbReference>
<dbReference type="ProteomicsDB" id="86583">
    <molecule id="Q9Y618-2"/>
</dbReference>
<dbReference type="ProteomicsDB" id="86585">
    <molecule id="Q9Y618-4"/>
</dbReference>
<dbReference type="ProteomicsDB" id="86586">
    <molecule id="Q9Y618-5"/>
</dbReference>
<dbReference type="Pumba" id="Q9Y618"/>
<dbReference type="Antibodypedia" id="1103">
    <property type="antibodies" value="280 antibodies from 37 providers"/>
</dbReference>
<dbReference type="DNASU" id="9612"/>
<dbReference type="Ensembl" id="ENST00000405201.6">
    <molecule id="Q9Y618-1"/>
    <property type="protein sequence ID" value="ENSP00000384018.1"/>
    <property type="gene ID" value="ENSG00000196498.15"/>
</dbReference>
<dbReference type="GeneID" id="9612"/>
<dbReference type="KEGG" id="hsa:9612"/>
<dbReference type="MANE-Select" id="ENST00000405201.6">
    <property type="protein sequence ID" value="ENSP00000384018.1"/>
    <property type="RefSeq nucleotide sequence ID" value="NM_006312.6"/>
    <property type="RefSeq protein sequence ID" value="NP_006303.4"/>
</dbReference>
<dbReference type="UCSC" id="uc058uwu.1">
    <molecule id="Q9Y618-1"/>
    <property type="organism name" value="human"/>
</dbReference>
<dbReference type="AGR" id="HGNC:7673"/>
<dbReference type="CTD" id="9612"/>
<dbReference type="DisGeNET" id="9612"/>
<dbReference type="GeneCards" id="NCOR2"/>
<dbReference type="HGNC" id="HGNC:7673">
    <property type="gene designation" value="NCOR2"/>
</dbReference>
<dbReference type="HPA" id="ENSG00000196498">
    <property type="expression patterns" value="Low tissue specificity"/>
</dbReference>
<dbReference type="MalaCards" id="NCOR2"/>
<dbReference type="MIM" id="600848">
    <property type="type" value="gene"/>
</dbReference>
<dbReference type="neXtProt" id="NX_Q9Y618"/>
<dbReference type="OpenTargets" id="ENSG00000196498"/>
<dbReference type="PharmGKB" id="PA31478"/>
<dbReference type="VEuPathDB" id="HostDB:ENSG00000196498"/>
<dbReference type="eggNOG" id="KOG1878">
    <property type="taxonomic scope" value="Eukaryota"/>
</dbReference>
<dbReference type="GeneTree" id="ENSGT00940000159022"/>
<dbReference type="InParanoid" id="Q9Y618"/>
<dbReference type="OMA" id="RGAETHY"/>
<dbReference type="OrthoDB" id="10258692at2759"/>
<dbReference type="PAN-GO" id="Q9Y618">
    <property type="GO annotations" value="2 GO annotations based on evolutionary models"/>
</dbReference>
<dbReference type="PhylomeDB" id="Q9Y618"/>
<dbReference type="PathwayCommons" id="Q9Y618"/>
<dbReference type="Reactome" id="R-HSA-1989781">
    <property type="pathway name" value="PPARA activates gene expression"/>
</dbReference>
<dbReference type="Reactome" id="R-HSA-2122947">
    <property type="pathway name" value="NOTCH1 Intracellular Domain Regulates Transcription"/>
</dbReference>
<dbReference type="Reactome" id="R-HSA-2173795">
    <property type="pathway name" value="Downregulation of SMAD2/3:SMAD4 transcriptional activity"/>
</dbReference>
<dbReference type="Reactome" id="R-HSA-2644606">
    <property type="pathway name" value="Constitutive Signaling by NOTCH1 PEST Domain Mutants"/>
</dbReference>
<dbReference type="Reactome" id="R-HSA-2894862">
    <property type="pathway name" value="Constitutive Signaling by NOTCH1 HD+PEST Domain Mutants"/>
</dbReference>
<dbReference type="Reactome" id="R-HSA-3214815">
    <property type="pathway name" value="HDACs deacetylate histones"/>
</dbReference>
<dbReference type="Reactome" id="R-HSA-350054">
    <property type="pathway name" value="Notch-HLH transcription pathway"/>
</dbReference>
<dbReference type="Reactome" id="R-HSA-381340">
    <property type="pathway name" value="Transcriptional regulation of white adipocyte differentiation"/>
</dbReference>
<dbReference type="Reactome" id="R-HSA-383280">
    <property type="pathway name" value="Nuclear Receptor transcription pathway"/>
</dbReference>
<dbReference type="Reactome" id="R-HSA-3899300">
    <property type="pathway name" value="SUMOylation of transcription cofactors"/>
</dbReference>
<dbReference type="Reactome" id="R-HSA-400206">
    <property type="pathway name" value="Regulation of lipid metabolism by PPARalpha"/>
</dbReference>
<dbReference type="Reactome" id="R-HSA-9022537">
    <property type="pathway name" value="Loss of MECP2 binding ability to the NCoR/SMRT complex"/>
</dbReference>
<dbReference type="Reactome" id="R-HSA-9022692">
    <property type="pathway name" value="Regulation of MECP2 expression and activity"/>
</dbReference>
<dbReference type="Reactome" id="R-HSA-9029569">
    <property type="pathway name" value="NR1H3 &amp; NR1H2 regulate gene expression linked to cholesterol transport and efflux"/>
</dbReference>
<dbReference type="Reactome" id="R-HSA-9609690">
    <property type="pathway name" value="HCMV Early Events"/>
</dbReference>
<dbReference type="Reactome" id="R-HSA-9623433">
    <property type="pathway name" value="NR1H2 &amp; NR1H3 regulate gene expression to control bile acid homeostasis"/>
</dbReference>
<dbReference type="Reactome" id="R-HSA-9707564">
    <property type="pathway name" value="Cytoprotection by HMOX1"/>
</dbReference>
<dbReference type="Reactome" id="R-HSA-9841922">
    <property type="pathway name" value="MLL4 and MLL3 complexes regulate expression of PPARG target genes in adipogenesis and hepatic steatosis"/>
</dbReference>
<dbReference type="SignaLink" id="Q9Y618"/>
<dbReference type="SIGNOR" id="Q9Y618"/>
<dbReference type="BioGRID-ORCS" id="9612">
    <property type="hits" value="47 hits in 1186 CRISPR screens"/>
</dbReference>
<dbReference type="ChiTaRS" id="NCOR2">
    <property type="organism name" value="human"/>
</dbReference>
<dbReference type="EvolutionaryTrace" id="Q9Y618"/>
<dbReference type="GeneWiki" id="Nuclear_receptor_co-repressor_2"/>
<dbReference type="GenomeRNAi" id="9612"/>
<dbReference type="Pharos" id="Q9Y618">
    <property type="development level" value="Tchem"/>
</dbReference>
<dbReference type="PRO" id="PR:Q9Y618"/>
<dbReference type="Proteomes" id="UP000005640">
    <property type="component" value="Chromosome 12"/>
</dbReference>
<dbReference type="RNAct" id="Q9Y618">
    <property type="molecule type" value="protein"/>
</dbReference>
<dbReference type="Bgee" id="ENSG00000196498">
    <property type="expression patterns" value="Expressed in sural nerve and 201 other cell types or tissues"/>
</dbReference>
<dbReference type="ExpressionAtlas" id="Q9Y618">
    <property type="expression patterns" value="baseline and differential"/>
</dbReference>
<dbReference type="GO" id="GO:0000785">
    <property type="term" value="C:chromatin"/>
    <property type="evidence" value="ECO:0000314"/>
    <property type="project" value="BHF-UCL"/>
</dbReference>
<dbReference type="GO" id="GO:0016020">
    <property type="term" value="C:membrane"/>
    <property type="evidence" value="ECO:0007005"/>
    <property type="project" value="UniProtKB"/>
</dbReference>
<dbReference type="GO" id="GO:0016604">
    <property type="term" value="C:nuclear body"/>
    <property type="evidence" value="ECO:0000314"/>
    <property type="project" value="MGI"/>
</dbReference>
<dbReference type="GO" id="GO:0016363">
    <property type="term" value="C:nuclear matrix"/>
    <property type="evidence" value="ECO:0000314"/>
    <property type="project" value="UniProtKB"/>
</dbReference>
<dbReference type="GO" id="GO:0005654">
    <property type="term" value="C:nucleoplasm"/>
    <property type="evidence" value="ECO:0000314"/>
    <property type="project" value="HPA"/>
</dbReference>
<dbReference type="GO" id="GO:0005634">
    <property type="term" value="C:nucleus"/>
    <property type="evidence" value="ECO:0000314"/>
    <property type="project" value="MGI"/>
</dbReference>
<dbReference type="GO" id="GO:0017053">
    <property type="term" value="C:transcription repressor complex"/>
    <property type="evidence" value="ECO:0000314"/>
    <property type="project" value="BHF-UCL"/>
</dbReference>
<dbReference type="GO" id="GO:0003682">
    <property type="term" value="F:chromatin binding"/>
    <property type="evidence" value="ECO:0007669"/>
    <property type="project" value="Ensembl"/>
</dbReference>
<dbReference type="GO" id="GO:0003677">
    <property type="term" value="F:DNA binding"/>
    <property type="evidence" value="ECO:0007669"/>
    <property type="project" value="UniProtKB-KW"/>
</dbReference>
<dbReference type="GO" id="GO:0008047">
    <property type="term" value="F:enzyme activator activity"/>
    <property type="evidence" value="ECO:0000314"/>
    <property type="project" value="UniProtKB"/>
</dbReference>
<dbReference type="GO" id="GO:0042826">
    <property type="term" value="F:histone deacetylase binding"/>
    <property type="evidence" value="ECO:0000353"/>
    <property type="project" value="UniProtKB"/>
</dbReference>
<dbReference type="GO" id="GO:0005112">
    <property type="term" value="F:Notch binding"/>
    <property type="evidence" value="ECO:0000353"/>
    <property type="project" value="UniProtKB"/>
</dbReference>
<dbReference type="GO" id="GO:0035259">
    <property type="term" value="F:nuclear glucocorticoid receptor binding"/>
    <property type="evidence" value="ECO:0007669"/>
    <property type="project" value="Ensembl"/>
</dbReference>
<dbReference type="GO" id="GO:0046965">
    <property type="term" value="F:nuclear retinoid X receptor binding"/>
    <property type="evidence" value="ECO:0007669"/>
    <property type="project" value="Ensembl"/>
</dbReference>
<dbReference type="GO" id="GO:0044877">
    <property type="term" value="F:protein-containing complex binding"/>
    <property type="evidence" value="ECO:0007669"/>
    <property type="project" value="Ensembl"/>
</dbReference>
<dbReference type="GO" id="GO:0003714">
    <property type="term" value="F:transcription corepressor activity"/>
    <property type="evidence" value="ECO:0000314"/>
    <property type="project" value="BHF-UCL"/>
</dbReference>
<dbReference type="GO" id="GO:0021549">
    <property type="term" value="P:cerebellum development"/>
    <property type="evidence" value="ECO:0007669"/>
    <property type="project" value="Ensembl"/>
</dbReference>
<dbReference type="GO" id="GO:0044849">
    <property type="term" value="P:estrous cycle"/>
    <property type="evidence" value="ECO:0007669"/>
    <property type="project" value="Ensembl"/>
</dbReference>
<dbReference type="GO" id="GO:0007595">
    <property type="term" value="P:lactation"/>
    <property type="evidence" value="ECO:0007669"/>
    <property type="project" value="Ensembl"/>
</dbReference>
<dbReference type="GO" id="GO:0060766">
    <property type="term" value="P:negative regulation of androgen receptor signaling pathway"/>
    <property type="evidence" value="ECO:0000315"/>
    <property type="project" value="UniProtKB"/>
</dbReference>
<dbReference type="GO" id="GO:0045892">
    <property type="term" value="P:negative regulation of DNA-templated transcription"/>
    <property type="evidence" value="ECO:0000315"/>
    <property type="project" value="UniProtKB"/>
</dbReference>
<dbReference type="GO" id="GO:1902894">
    <property type="term" value="P:negative regulation of miRNA transcription"/>
    <property type="evidence" value="ECO:0000315"/>
    <property type="project" value="BHF-UCL"/>
</dbReference>
<dbReference type="GO" id="GO:0000122">
    <property type="term" value="P:negative regulation of transcription by RNA polymerase II"/>
    <property type="evidence" value="ECO:0000314"/>
    <property type="project" value="MGI"/>
</dbReference>
<dbReference type="GO" id="GO:0010565">
    <property type="term" value="P:regulation of ketone metabolic process"/>
    <property type="evidence" value="ECO:0000315"/>
    <property type="project" value="BHF-UCL"/>
</dbReference>
<dbReference type="GO" id="GO:0032355">
    <property type="term" value="P:response to estradiol"/>
    <property type="evidence" value="ECO:0007669"/>
    <property type="project" value="Ensembl"/>
</dbReference>
<dbReference type="CDD" id="cd00167">
    <property type="entry name" value="SANT"/>
    <property type="match status" value="1"/>
</dbReference>
<dbReference type="FunFam" id="1.10.10.60:FF:000026">
    <property type="entry name" value="Nuclear receptor corepressor 2 isoform 1"/>
    <property type="match status" value="1"/>
</dbReference>
<dbReference type="FunFam" id="1.20.5.430:FF:000001">
    <property type="entry name" value="Nuclear receptor corepressor 2 isoform 1"/>
    <property type="match status" value="1"/>
</dbReference>
<dbReference type="FunFam" id="1.20.58.1880:FF:000002">
    <property type="entry name" value="nuclear receptor corepressor 2 isoform X1"/>
    <property type="match status" value="1"/>
</dbReference>
<dbReference type="Gene3D" id="1.20.5.430">
    <property type="match status" value="1"/>
</dbReference>
<dbReference type="Gene3D" id="1.20.58.1880">
    <property type="match status" value="1"/>
</dbReference>
<dbReference type="Gene3D" id="1.10.10.60">
    <property type="entry name" value="Homeodomain-like"/>
    <property type="match status" value="1"/>
</dbReference>
<dbReference type="IDEAL" id="IID00109"/>
<dbReference type="InterPro" id="IPR009057">
    <property type="entry name" value="Homeodomain-like_sf"/>
</dbReference>
<dbReference type="InterPro" id="IPR017930">
    <property type="entry name" value="Myb_dom"/>
</dbReference>
<dbReference type="InterPro" id="IPR051571">
    <property type="entry name" value="N-CoR_corepressor"/>
</dbReference>
<dbReference type="InterPro" id="IPR031557">
    <property type="entry name" value="N-CoR_GPS2_interact"/>
</dbReference>
<dbReference type="InterPro" id="IPR001005">
    <property type="entry name" value="SANT/Myb"/>
</dbReference>
<dbReference type="InterPro" id="IPR017884">
    <property type="entry name" value="SANT_dom"/>
</dbReference>
<dbReference type="PANTHER" id="PTHR13992">
    <property type="entry name" value="NUCLEAR RECEPTOR CO-REPRESSOR RELATED NCOR"/>
    <property type="match status" value="1"/>
</dbReference>
<dbReference type="PANTHER" id="PTHR13992:SF21">
    <property type="entry name" value="NUCLEAR RECEPTOR COREPRESSOR 2"/>
    <property type="match status" value="1"/>
</dbReference>
<dbReference type="Pfam" id="PF15784">
    <property type="entry name" value="GPS2_interact"/>
    <property type="match status" value="1"/>
</dbReference>
<dbReference type="Pfam" id="PF00249">
    <property type="entry name" value="Myb_DNA-binding"/>
    <property type="match status" value="2"/>
</dbReference>
<dbReference type="SMART" id="SM00717">
    <property type="entry name" value="SANT"/>
    <property type="match status" value="2"/>
</dbReference>
<dbReference type="SUPFAM" id="SSF46689">
    <property type="entry name" value="Homeodomain-like"/>
    <property type="match status" value="2"/>
</dbReference>
<dbReference type="PROSITE" id="PS51293">
    <property type="entry name" value="SANT"/>
    <property type="match status" value="2"/>
</dbReference>
<sequence length="2514" mass="273657">MSGSTQPVAQTWRATEPRYPPHSLSYPVQIARTHTDVGLLEYQHHSRDYASHLSPGSIIQPQRRRPSLLSEFQPGNERSQELHLRPESHSYLPELGKSEMEFIESKRPRLELLPDPLLRPSPLLATGQPAGSEDLTKDRSLTGKLEPVSPPSPPHTDPELELVPPRLSKEELIQNMDRVDREITMVEQQISKLKKKQQQLEEEAAKPPEPEKPVSPPPIESKHRSLVQIIYDENRKKAEAAHRILEGLGPQVELPLYNQPSDTRQYHENIKINQAMRKKLILYFKRRNHARKQWEQKFCQRYDQLMEAWEKKVERIENNPRRRAKESKVREYYEKQFPEIRKQRELQERMQSRVGQRGSGLSMSAARSEHEVSEIIDGLSEQENLEKQMRQLAVIPPMLYDADQQRIKFINMNGLMADPMKVYKDRQVMNMWSEQEKETFREKFMQHPKNFGLIASFLERKTVAECVLYYYLTKKNENYKSLVRRSYRRRGKSQQQQQQQQQQQQQQQQQPMPRSSQEEKDEKEKEKEAEKEEEKPEVENDKEDLLKEKTDDTSGEDNDEKEAVASKGRKTANSQGRRKGRITRSMANEANSEEAITPQQSAELASMELNESSRWTEEEMETAKKGLLEHGRNWSAIARMVGSKTVSQCKNFYFNYKKRQNLDEILQQHKLKMEKERNARRKKKKAPAAASEEAAFPPVVEDEEMEASGVSGNEEEMVEEAEALHASGNEVPRGECSGPATVNNSSDTESIPSPHTEAAKDTGQNGPKPPATLGADGPPPGPPTPPPEDIPAPTEPTPASEATGAPTPPPAPPSPSAPPPVVPKEEKEEETAAAPPVEEGEEQKPPAAEELAVDTGKAEEPVKSECTEEAEEGPAKGKDAEAAEATAEGALKAEKKEGGSGRATTAKSSGAPQDSDSSATCSADEVDEAEGGDKNRLLSPRPSLLTPTGDPRANASPQKPLDLKQLKQRAAAIPPIQVTKVHEPPREDAAPTKPAPPAPPPPQNLQPESDAPQQPGSSPRGKSRSPAPPADKEAFAAEAQKLPGDPPCWTSGLPFPVPPREVIKASPHAPDPSAFSYAPPGHPLPLGLHDTARPVLPRPPTISNPPPLISSAKHPSVLERQIGAISQGMSVQLHVPYSEHAKAPVGPVTMGLPLPMDPKKLAPFSGVKQEQLSPRGQAGPPESLGVPTAQEASVLRGTALGSVPGGSITKGIPSTRVPSDSAITYRGSITHGTPADVLYKGTITRIIGEDSPSRLDRGREDSLPKGHVIYEGKKGHVLSYEGGMSVTQCSKEDGRSSSGPPHETAAPKRTYDMMEGRVGRAISSASIEGLMGRAIPPERHSPHHLKEQHHIRGSITQGIPRSYVEAQEDYLRREAKLLKREGTPPPPPPSRDLTEAYKTQALGPLKLKPAHEGLVATVKEAGRSIHEIPREELRHTPELPLAPRPLKEGSITQGTPLKYDTGASTTGSKKHDVRSLIGSPGRTFPPVHPLDVMADARALERACYEESLKSRPGTASSSGGSIARGAPVIVPELGKPRQSPLTYEDHGAPFAGHLPRGSPVTTREPTPRLQEGSLSSSKASQDRKLTSTPREIAKSPHSTVPEHHPHPISPYEHLLRGVSGVDLYRSHIPLAFDPTSIPRGIPLDAAAAYYLPRHLAPNPTYPHLYPPYLIRGYPDTAALENRQTIINDYITSQQMHHNAATAMAQRADMLRGLSPRESSLALNYAAGPRGIIDLSQVPHLPVLVPPTPGTPATAMDRLAYLPTAPQPFSSRHSSSPLSPGGPTHLTKPTTTSSSERERDRDRERDRDREREKSILTSTTTVEHAPIWRPGTEQSSGSSGGGGGSSSRPASHSHAHQHSPISPRTQDALQQRPSVLHNTGMKGIITAVEPSTPTVLRSTSTSSPVRPAATFPPATHCPLGGTLDGVYPTLMEPVLLPKEAPRVARPERPRADTGHAFLAKPPARSGLEPASSPSKGSEPRPLVPPVSGHATIARTPAKNLAPHHASPDPPAPPASASDPHREKTQSKPFSIQELELRSLGYHGSSYSPEGVEPVSPVSSPSLTHDKGLPKHLEELDKSHLEGELRPKQPGPVKLGGEAAHLPHLRPLPESQPSSSPLLQTAPGVKGHQRVVTLAQHISEVITQDYTRHHPQQLSAPLPAPLYSFPGASCPVLDLRRPPSDLYLPPPDHGAPARGSPHSEGGKRSPEPNKTSVLGGGEDGIEPVSPPEGMTEPGHSRSAVYPLLYRDGEQTEPSRMGSKSPGNTSQPPAFFSKLTESNSAMVKSKKQEINKKLNTHNRNEPEYNISQPGTEIFNMPAITGTGLMTYRSQAVQEHASTNMGLEAIIRKALMGKYDQWEESPPLSANAFNPLNASASLPAAMPITAADGRSDHTLTSPGGGGKAKVSGRPSSRKAKSPAPGLASGDRPPSVSSVHSEGDCNRRTPLTNRVWEDRPSSAGSTPFPYNPLIMRLQAGVMASPPPPGLPAGSGPLAGPHHAWDEEPKPLLCSQYETLSDSE</sequence>
<protein>
    <recommendedName>
        <fullName evidence="38">Nuclear receptor corepressor 2</fullName>
        <shortName evidence="38">N-CoR2</shortName>
    </recommendedName>
    <alternativeName>
        <fullName>CTG repeat protein 26</fullName>
    </alternativeName>
    <alternativeName>
        <fullName>SMAP270</fullName>
    </alternativeName>
    <alternativeName>
        <fullName evidence="32">Silencing mediator of retinoic acid and thyroid hormone receptor</fullName>
        <shortName evidence="32">SMRT</shortName>
    </alternativeName>
    <alternativeName>
        <fullName evidence="36">T3 receptor-associating factor</fullName>
        <shortName evidence="36">TRAC</shortName>
    </alternativeName>
    <alternativeName>
        <fullName evidence="36">Thyroid-, retinoic-acid-receptor-associated corepressor</fullName>
    </alternativeName>
</protein>
<evidence type="ECO:0000250" key="1">
    <source>
        <dbReference type="UniProtKB" id="Q60974"/>
    </source>
</evidence>
<evidence type="ECO:0000250" key="2">
    <source>
        <dbReference type="UniProtKB" id="Q9WU42"/>
    </source>
</evidence>
<evidence type="ECO:0000255" key="3"/>
<evidence type="ECO:0000255" key="4">
    <source>
        <dbReference type="PROSITE-ProRule" id="PRU00624"/>
    </source>
</evidence>
<evidence type="ECO:0000256" key="5">
    <source>
        <dbReference type="SAM" id="MobiDB-lite"/>
    </source>
</evidence>
<evidence type="ECO:0000269" key="6">
    <source>
    </source>
</evidence>
<evidence type="ECO:0000269" key="7">
    <source>
    </source>
</evidence>
<evidence type="ECO:0000269" key="8">
    <source>
    </source>
</evidence>
<evidence type="ECO:0000269" key="9">
    <source>
    </source>
</evidence>
<evidence type="ECO:0000269" key="10">
    <source>
    </source>
</evidence>
<evidence type="ECO:0000269" key="11">
    <source>
    </source>
</evidence>
<evidence type="ECO:0000269" key="12">
    <source>
    </source>
</evidence>
<evidence type="ECO:0000269" key="13">
    <source>
    </source>
</evidence>
<evidence type="ECO:0000269" key="14">
    <source>
    </source>
</evidence>
<evidence type="ECO:0000269" key="15">
    <source>
    </source>
</evidence>
<evidence type="ECO:0000269" key="16">
    <source>
    </source>
</evidence>
<evidence type="ECO:0000269" key="17">
    <source>
    </source>
</evidence>
<evidence type="ECO:0000269" key="18">
    <source>
    </source>
</evidence>
<evidence type="ECO:0000269" key="19">
    <source>
    </source>
</evidence>
<evidence type="ECO:0000269" key="20">
    <source>
    </source>
</evidence>
<evidence type="ECO:0000269" key="21">
    <source>
    </source>
</evidence>
<evidence type="ECO:0000269" key="22">
    <source>
    </source>
</evidence>
<evidence type="ECO:0000269" key="23">
    <source>
    </source>
</evidence>
<evidence type="ECO:0000269" key="24">
    <source>
    </source>
</evidence>
<evidence type="ECO:0000269" key="25">
    <source>
    </source>
</evidence>
<evidence type="ECO:0000269" key="26">
    <source>
    </source>
</evidence>
<evidence type="ECO:0000269" key="27">
    <source>
    </source>
</evidence>
<evidence type="ECO:0000269" key="28">
    <source>
    </source>
</evidence>
<evidence type="ECO:0000269" key="29">
    <source>
    </source>
</evidence>
<evidence type="ECO:0000269" key="30">
    <source ref="4"/>
</evidence>
<evidence type="ECO:0000269" key="31">
    <source ref="6"/>
</evidence>
<evidence type="ECO:0000303" key="32">
    <source>
    </source>
</evidence>
<evidence type="ECO:0000303" key="33">
    <source>
    </source>
</evidence>
<evidence type="ECO:0000303" key="34">
    <source>
    </source>
</evidence>
<evidence type="ECO:0000303" key="35">
    <source>
    </source>
</evidence>
<evidence type="ECO:0000303" key="36">
    <source>
    </source>
</evidence>
<evidence type="ECO:0000303" key="37">
    <source ref="4"/>
</evidence>
<evidence type="ECO:0000305" key="38"/>
<evidence type="ECO:0000312" key="39">
    <source>
        <dbReference type="HGNC" id="HGNC:7673"/>
    </source>
</evidence>
<evidence type="ECO:0007744" key="40">
    <source>
        <dbReference type="PDB" id="2L5G"/>
    </source>
</evidence>
<evidence type="ECO:0007744" key="41">
    <source>
        <dbReference type="PDB" id="4A69"/>
    </source>
</evidence>
<evidence type="ECO:0007744" key="42">
    <source>
    </source>
</evidence>
<evidence type="ECO:0007744" key="43">
    <source>
    </source>
</evidence>
<evidence type="ECO:0007744" key="44">
    <source>
    </source>
</evidence>
<evidence type="ECO:0007744" key="45">
    <source>
    </source>
</evidence>
<evidence type="ECO:0007744" key="46">
    <source>
    </source>
</evidence>
<evidence type="ECO:0007744" key="47">
    <source>
    </source>
</evidence>
<evidence type="ECO:0007744" key="48">
    <source>
    </source>
</evidence>
<evidence type="ECO:0007744" key="49">
    <source>
    </source>
</evidence>
<evidence type="ECO:0007744" key="50">
    <source>
    </source>
</evidence>
<evidence type="ECO:0007744" key="51">
    <source>
    </source>
</evidence>
<evidence type="ECO:0007744" key="52">
    <source>
    </source>
</evidence>
<evidence type="ECO:0007829" key="53">
    <source>
        <dbReference type="PDB" id="1R2B"/>
    </source>
</evidence>
<evidence type="ECO:0007829" key="54">
    <source>
        <dbReference type="PDB" id="1XC5"/>
    </source>
</evidence>
<evidence type="ECO:0007829" key="55">
    <source>
        <dbReference type="PDB" id="2L5G"/>
    </source>
</evidence>
<evidence type="ECO:0007829" key="56">
    <source>
        <dbReference type="PDB" id="2LTP"/>
    </source>
</evidence>
<evidence type="ECO:0007829" key="57">
    <source>
        <dbReference type="PDB" id="2ODD"/>
    </source>
</evidence>
<evidence type="ECO:0007829" key="58">
    <source>
        <dbReference type="PDB" id="4A69"/>
    </source>
</evidence>
<evidence type="ECO:0007829" key="59">
    <source>
        <dbReference type="PDB" id="5ZOO"/>
    </source>
</evidence>
<evidence type="ECO:0007829" key="60">
    <source>
        <dbReference type="PDB" id="5ZOP"/>
    </source>
</evidence>
<evidence type="ECO:0007829" key="61">
    <source>
        <dbReference type="PDB" id="8AQN"/>
    </source>
</evidence>
<evidence type="ECO:0007829" key="62">
    <source>
        <dbReference type="PDB" id="8B94"/>
    </source>
</evidence>
<accession>Q9Y618</accession>
<accession>O00613</accession>
<accession>O15416</accession>
<accession>O15421</accession>
<accession>Q13354</accession>
<accession>Q56D06</accession>
<accession>Q59GM0</accession>
<accession>Q9Y5U0</accession>
<feature type="chain" id="PRO_0000055622" description="Nuclear receptor corepressor 2">
    <location>
        <begin position="1"/>
        <end position="2514"/>
    </location>
</feature>
<feature type="domain" description="SANT 1" evidence="4">
    <location>
        <begin position="427"/>
        <end position="478"/>
    </location>
</feature>
<feature type="domain" description="SANT 2" evidence="4">
    <location>
        <begin position="610"/>
        <end position="661"/>
    </location>
</feature>
<feature type="region of interest" description="Disordered" evidence="5">
    <location>
        <begin position="1"/>
        <end position="24"/>
    </location>
</feature>
<feature type="region of interest" description="Disordered" evidence="5">
    <location>
        <begin position="120"/>
        <end position="162"/>
    </location>
</feature>
<feature type="region of interest" description="Disordered" evidence="5">
    <location>
        <begin position="190"/>
        <end position="220"/>
    </location>
</feature>
<feature type="region of interest" description="Interaction with SIN3A/B" evidence="1">
    <location>
        <begin position="254"/>
        <end position="312"/>
    </location>
</feature>
<feature type="region of interest" description="Deacetylase activation domain (DAD)" evidence="25">
    <location>
        <begin position="389"/>
        <end position="480"/>
    </location>
</feature>
<feature type="region of interest" description="Disordered" evidence="5">
    <location>
        <begin position="487"/>
        <end position="622"/>
    </location>
</feature>
<feature type="region of interest" description="Disordered" evidence="5">
    <location>
        <begin position="674"/>
        <end position="1081"/>
    </location>
</feature>
<feature type="region of interest" description="Disordered" evidence="5">
    <location>
        <begin position="1165"/>
        <end position="1186"/>
    </location>
</feature>
<feature type="region of interest" description="Disordered" evidence="5">
    <location>
        <begin position="1287"/>
        <end position="1307"/>
    </location>
</feature>
<feature type="region of interest" description="Disordered" evidence="5">
    <location>
        <begin position="1440"/>
        <end position="1482"/>
    </location>
</feature>
<feature type="region of interest" description="Disordered" evidence="5">
    <location>
        <begin position="1506"/>
        <end position="1609"/>
    </location>
</feature>
<feature type="region of interest" description="Disordered" evidence="5">
    <location>
        <begin position="1763"/>
        <end position="1867"/>
    </location>
</feature>
<feature type="region of interest" description="Disordered" evidence="5">
    <location>
        <begin position="1937"/>
        <end position="2124"/>
    </location>
</feature>
<feature type="region of interest" description="Required for interaction with RARA in the absence of its ligand" evidence="22">
    <location>
        <begin position="2128"/>
        <end position="2131"/>
    </location>
</feature>
<feature type="region of interest" description="Disordered" evidence="5">
    <location>
        <begin position="2174"/>
        <end position="2235"/>
    </location>
</feature>
<feature type="region of interest" description="Disordered" evidence="5">
    <location>
        <begin position="2248"/>
        <end position="2269"/>
    </location>
</feature>
<feature type="region of interest" description="Disordered" evidence="5">
    <location>
        <begin position="2384"/>
        <end position="2500"/>
    </location>
</feature>
<feature type="coiled-coil region" evidence="3">
    <location>
        <begin position="174"/>
        <end position="215"/>
    </location>
</feature>
<feature type="coiled-coil region" evidence="3">
    <location>
        <begin position="522"/>
        <end position="561"/>
    </location>
</feature>
<feature type="short sequence motif" description="CORNR box of ID1" evidence="1">
    <location>
        <begin position="2136"/>
        <end position="2140"/>
    </location>
</feature>
<feature type="short sequence motif" description="CORNR box of ID2" evidence="1">
    <location>
        <begin position="2339"/>
        <end position="2343"/>
    </location>
</feature>
<feature type="compositionally biased region" description="Polar residues" evidence="5">
    <location>
        <begin position="1"/>
        <end position="13"/>
    </location>
</feature>
<feature type="compositionally biased region" description="Basic and acidic residues" evidence="5">
    <location>
        <begin position="203"/>
        <end position="212"/>
    </location>
</feature>
<feature type="compositionally biased region" description="Low complexity" evidence="5">
    <location>
        <begin position="494"/>
        <end position="510"/>
    </location>
</feature>
<feature type="compositionally biased region" description="Basic and acidic residues" evidence="5">
    <location>
        <begin position="516"/>
        <end position="552"/>
    </location>
</feature>
<feature type="compositionally biased region" description="Polar residues" evidence="5">
    <location>
        <begin position="597"/>
        <end position="613"/>
    </location>
</feature>
<feature type="compositionally biased region" description="Polar residues" evidence="5">
    <location>
        <begin position="740"/>
        <end position="753"/>
    </location>
</feature>
<feature type="compositionally biased region" description="Pro residues" evidence="5">
    <location>
        <begin position="777"/>
        <end position="796"/>
    </location>
</feature>
<feature type="compositionally biased region" description="Pro residues" evidence="5">
    <location>
        <begin position="806"/>
        <end position="822"/>
    </location>
</feature>
<feature type="compositionally biased region" description="Basic and acidic residues" evidence="5">
    <location>
        <begin position="856"/>
        <end position="866"/>
    </location>
</feature>
<feature type="compositionally biased region" description="Polar residues" evidence="5">
    <location>
        <begin position="902"/>
        <end position="921"/>
    </location>
</feature>
<feature type="compositionally biased region" description="Low complexity" evidence="5">
    <location>
        <begin position="937"/>
        <end position="948"/>
    </location>
</feature>
<feature type="compositionally biased region" description="Basic and acidic residues" evidence="5">
    <location>
        <begin position="980"/>
        <end position="990"/>
    </location>
</feature>
<feature type="compositionally biased region" description="Pro residues" evidence="5">
    <location>
        <begin position="993"/>
        <end position="1004"/>
    </location>
</feature>
<feature type="compositionally biased region" description="Polar residues" evidence="5">
    <location>
        <begin position="1005"/>
        <end position="1014"/>
    </location>
</feature>
<feature type="compositionally biased region" description="Low complexity" evidence="5">
    <location>
        <begin position="1513"/>
        <end position="1526"/>
    </location>
</feature>
<feature type="compositionally biased region" description="Low complexity" evidence="5">
    <location>
        <begin position="1766"/>
        <end position="1782"/>
    </location>
</feature>
<feature type="compositionally biased region" description="Basic and acidic residues" evidence="5">
    <location>
        <begin position="1794"/>
        <end position="1813"/>
    </location>
</feature>
<feature type="compositionally biased region" description="Basic and acidic residues" evidence="5">
    <location>
        <begin position="1938"/>
        <end position="1952"/>
    </location>
</feature>
<feature type="compositionally biased region" description="Low complexity" evidence="5">
    <location>
        <begin position="2043"/>
        <end position="2060"/>
    </location>
</feature>
<feature type="compositionally biased region" description="Basic and acidic residues" evidence="5">
    <location>
        <begin position="2062"/>
        <end position="2085"/>
    </location>
</feature>
<feature type="compositionally biased region" description="Low complexity" evidence="5">
    <location>
        <begin position="2106"/>
        <end position="2117"/>
    </location>
</feature>
<feature type="compositionally biased region" description="Low complexity" evidence="5">
    <location>
        <begin position="2482"/>
        <end position="2492"/>
    </location>
</feature>
<feature type="binding site" evidence="25 41">
    <location>
        <position position="449"/>
    </location>
    <ligand>
        <name>1D-myo-inositol 1,4,5,6-tetrakisphosphate</name>
        <dbReference type="ChEBI" id="CHEBI:57627"/>
    </ligand>
</feature>
<feature type="binding site" evidence="25 41">
    <location>
        <position position="470"/>
    </location>
    <ligand>
        <name>1D-myo-inositol 1,4,5,6-tetrakisphosphate</name>
        <dbReference type="ChEBI" id="CHEBI:57627"/>
    </ligand>
</feature>
<feature type="binding site" evidence="25 41">
    <location>
        <position position="471"/>
    </location>
    <ligand>
        <name>1D-myo-inositol 1,4,5,6-tetrakisphosphate</name>
        <dbReference type="ChEBI" id="CHEBI:57627"/>
    </ligand>
</feature>
<feature type="modified residue" description="Asymmetric dimethylarginine" evidence="2">
    <location>
        <position position="18"/>
    </location>
</feature>
<feature type="modified residue" description="Phosphoserine" evidence="43 49">
    <location>
        <position position="54"/>
    </location>
</feature>
<feature type="modified residue" description="Phosphoserine" evidence="46 49">
    <location>
        <position position="67"/>
    </location>
</feature>
<feature type="modified residue" description="Phosphoserine" evidence="42 44 46 47 48 51">
    <location>
        <position position="149"/>
    </location>
</feature>
<feature type="modified residue" description="Phosphoserine" evidence="44 46 47 48 51">
    <location>
        <position position="152"/>
    </location>
</feature>
<feature type="modified residue" description="Phosphothreonine" evidence="44">
    <location>
        <position position="156"/>
    </location>
</feature>
<feature type="modified residue" description="Phosphoserine" evidence="42 49 51">
    <location>
        <position position="215"/>
    </location>
</feature>
<feature type="modified residue" description="Phosphoserine" evidence="49">
    <location>
        <position position="493"/>
    </location>
</feature>
<feature type="modified residue" description="Phosphothreonine" evidence="46">
    <location>
        <position position="553"/>
    </location>
</feature>
<feature type="modified residue" description="Phosphoserine" evidence="46 47">
    <location>
        <position position="554"/>
    </location>
</feature>
<feature type="modified residue" description="Phosphoserine" evidence="44">
    <location>
        <position position="750"/>
    </location>
</feature>
<feature type="modified residue" description="Phosphoserine" evidence="44">
    <location>
        <position position="753"/>
    </location>
</feature>
<feature type="modified residue" description="N6-acetyllysine" evidence="45">
    <location>
        <position position="878"/>
    </location>
</feature>
<feature type="modified residue" description="Phosphoserine" evidence="46 49">
    <location>
        <position position="939"/>
    </location>
</feature>
<feature type="modified residue" description="Phosphothreonine" evidence="49">
    <location>
        <position position="946"/>
    </location>
</feature>
<feature type="modified residue" description="Phosphoserine" evidence="47 48 49 51">
    <location>
        <position position="956"/>
    </location>
</feature>
<feature type="modified residue" description="N6-acetyllysine" evidence="45">
    <location>
        <position position="959"/>
    </location>
</feature>
<feature type="modified residue" description="Phosphoserine" evidence="49">
    <location>
        <position position="1173"/>
    </location>
</feature>
<feature type="modified residue" description="N6-acetyllysine" evidence="45">
    <location>
        <position position="1210"/>
    </location>
</feature>
<feature type="modified residue" description="N6-acetyllysine" evidence="45">
    <location>
        <position position="1240"/>
    </location>
</feature>
<feature type="modified residue" description="Phosphoserine" evidence="44 49">
    <location>
        <position position="1251"/>
    </location>
</feature>
<feature type="modified residue" description="Phosphoserine" evidence="46 49">
    <location>
        <position position="1323"/>
    </location>
</feature>
<feature type="modified residue" description="Phosphothreonine" evidence="42 44 49">
    <location>
        <position position="1383"/>
    </location>
</feature>
<feature type="modified residue" description="Phosphoserine" evidence="44 49">
    <location>
        <position position="1479"/>
    </location>
</feature>
<feature type="modified residue" description="Phosphoserine" evidence="49">
    <location>
        <position position="1539"/>
    </location>
</feature>
<feature type="modified residue" description="Phosphoserine" evidence="2">
    <location>
        <position position="1595"/>
    </location>
</feature>
<feature type="modified residue" description="Phosphoserine" evidence="49">
    <location>
        <position position="1619"/>
    </location>
</feature>
<feature type="modified residue" description="Asymmetric dimethylarginine" evidence="50">
    <location>
        <position position="1653"/>
    </location>
</feature>
<feature type="modified residue" description="Phosphoserine" evidence="49">
    <location>
        <position position="1775"/>
    </location>
</feature>
<feature type="modified residue" description="Phosphoserine" evidence="48 49">
    <location>
        <position position="1778"/>
    </location>
</feature>
<feature type="modified residue" description="Phosphoserine" evidence="47">
    <location>
        <position position="1861"/>
    </location>
</feature>
<feature type="modified residue" description="N6-acetyllysine" evidence="45">
    <location>
        <position position="1959"/>
    </location>
</feature>
<feature type="modified residue" description="Phosphoserine" evidence="42 51">
    <location>
        <position position="2005"/>
    </location>
</feature>
<feature type="modified residue" description="N6-acetyllysine" evidence="45">
    <location>
        <position position="2026"/>
    </location>
</feature>
<feature type="modified residue" description="Phosphoserine" evidence="46">
    <location>
        <position position="2046"/>
    </location>
</feature>
<feature type="modified residue" description="Phosphoserine" evidence="44 46 49 51">
    <location>
        <position position="2054"/>
    </location>
</feature>
<feature type="modified residue" description="Phosphoserine" evidence="46">
    <location>
        <position position="2057"/>
    </location>
</feature>
<feature type="modified residue" description="Phosphoserine" evidence="46">
    <location>
        <position position="2058"/>
    </location>
</feature>
<feature type="modified residue" description="Phosphoserine" evidence="2">
    <location>
        <position position="2060"/>
    </location>
</feature>
<feature type="modified residue" description="Phosphothreonine" evidence="44 51">
    <location>
        <position position="2062"/>
    </location>
</feature>
<feature type="modified residue" description="Phosphoserine" evidence="49">
    <location>
        <position position="2077"/>
    </location>
</feature>
<feature type="modified residue" description="Phosphoserine" evidence="47">
    <location>
        <position position="2203"/>
    </location>
</feature>
<feature type="modified residue" description="Phosphoserine" evidence="44 46 47 49">
    <location>
        <position position="2223"/>
    </location>
</feature>
<feature type="modified residue" description="Phosphoserine" evidence="42 44 46 47 48 49">
    <location>
        <position position="2258"/>
    </location>
</feature>
<feature type="modified residue" description="Phosphoserine" evidence="49">
    <location>
        <position position="2413"/>
    </location>
</feature>
<feature type="cross-link" description="Glycyl lysine isopeptide (Lys-Gly) (interchain with G-Cter in SUMO2)" evidence="52">
    <location>
        <position position="1168"/>
    </location>
</feature>
<feature type="splice variant" id="VSP_003412" description="In isoform 2." evidence="36">
    <location>
        <begin position="1"/>
        <end position="1702"/>
    </location>
</feature>
<feature type="splice variant" id="VSP_036595" description="In isoform 3 and isoform 4." evidence="33 37">
    <location>
        <begin position="724"/>
        <end position="740"/>
    </location>
</feature>
<feature type="splice variant" id="VSP_003413" description="In isoform 2 and isoform 4." evidence="36 37">
    <location>
        <begin position="2350"/>
        <end position="2395"/>
    </location>
</feature>
<feature type="sequence variant" id="VAR_060073" description="In dbSNP:rs7978237." evidence="31">
    <original>G</original>
    <variation>E</variation>
    <location>
        <position position="781"/>
    </location>
</feature>
<feature type="sequence variant" id="VAR_054751" description="In dbSNP:rs2229840." evidence="6 7 29 30">
    <original>A</original>
    <variation>T</variation>
    <location>
        <position position="1699"/>
    </location>
</feature>
<feature type="sequence variant" id="VAR_060074" description="In dbSNP:rs2230944.">
    <original>P</original>
    <variation>S</variation>
    <location>
        <position position="2001"/>
    </location>
</feature>
<feature type="mutagenesis site" description="Abolishes interaction with TBL1X." evidence="24">
    <original>HRIL</original>
    <variation>AEIA</variation>
    <location>
        <begin position="242"/>
        <end position="245"/>
    </location>
</feature>
<feature type="mutagenesis site" description="Abolishes interaction with the apo LBD of RARA. Restores some interaction on the addition of inverse agonist BMS493." evidence="22">
    <original>R</original>
    <variation>A</variation>
    <location>
        <position position="2128"/>
    </location>
</feature>
<feature type="mutagenesis site" description="Abolishes interaction with the apo LBD of RARA. No change on interaction on the addition of inverse agonist BMS493." evidence="22">
    <original>V</original>
    <variation>P</variation>
    <location>
        <position position="2130"/>
    </location>
</feature>
<feature type="mutagenesis site" description="Abolishes interaction with the apo LBD of RARA. Restores some interaction on the addition of inverse agonist BMS493." evidence="22">
    <original>T</original>
    <variation>G</variation>
    <location>
        <position position="2131"/>
    </location>
</feature>
<feature type="sequence conflict" description="In Ref. 2; AAD20946." evidence="38" ref="2">
    <original>P</original>
    <variation>L</variation>
    <location>
        <position position="7"/>
    </location>
</feature>
<feature type="sequence conflict" description="In Ref. 2; AAD20946." evidence="38" ref="2">
    <original>E</original>
    <variation>K</variation>
    <location>
        <position position="295"/>
    </location>
</feature>
<feature type="sequence conflict" description="In Ref. 2; AAD20946." evidence="38" ref="2">
    <original>W</original>
    <variation>L</variation>
    <location>
        <position position="309"/>
    </location>
</feature>
<feature type="sequence conflict" description="In Ref. 3; AAD22973 and 4; AAX77219." evidence="38" ref="3 4">
    <location>
        <position position="352"/>
    </location>
</feature>
<feature type="sequence conflict" description="In Ref. 3; AAD22973 and 4; AAX77219." evidence="38" ref="3 4">
    <original>A</original>
    <variation>P</variation>
    <location>
        <position position="365"/>
    </location>
</feature>
<feature type="sequence conflict" description="In Ref. 7; AAB91446." evidence="38" ref="7">
    <original>SS</original>
    <variation>EF</variation>
    <location>
        <begin position="612"/>
        <end position="613"/>
    </location>
</feature>
<feature type="sequence conflict" description="In Ref. 3; AAD22973 and 4; AAX77219." evidence="38" ref="3 4">
    <original>S</original>
    <variation>T</variation>
    <location>
        <position position="711"/>
    </location>
</feature>
<feature type="sequence conflict" description="In Ref. 3; AAD22973 and 4; AAX77219." evidence="38" ref="3 4">
    <original>P</original>
    <variation>S</variation>
    <location>
        <position position="796"/>
    </location>
</feature>
<feature type="sequence conflict" description="In Ref. 3; AAD22973 and 4; AAX77219." evidence="38" ref="3 4">
    <original>G</original>
    <variation>L</variation>
    <location>
        <position position="804"/>
    </location>
</feature>
<feature type="sequence conflict" description="In Ref. 3; AAD22973 and 4; AAX77219." evidence="38" ref="3 4">
    <original>S</original>
    <variation>F</variation>
    <location>
        <position position="814"/>
    </location>
</feature>
<feature type="sequence conflict" description="In Ref. 3; AAD22973 and 4; AAX77219." evidence="38" ref="3 4">
    <original>A</original>
    <variation>S</variation>
    <location>
        <position position="817"/>
    </location>
</feature>
<feature type="sequence conflict" description="In Ref. 3; AAD22973 and 4; AAX77219." evidence="38" ref="3 4">
    <original>G</original>
    <variation>R</variation>
    <location>
        <position position="889"/>
    </location>
</feature>
<feature type="sequence conflict" description="In Ref. 2; AAD20946, 3; AAD22973, 4; AAX77219 and 8; AAC50236." evidence="38" ref="2 3 4 8">
    <original>T</original>
    <variation>M</variation>
    <location>
        <position position="1562"/>
    </location>
</feature>
<feature type="sequence conflict" description="In Ref. 2; AAD20946." evidence="38" ref="2">
    <original>G</original>
    <variation>GSSG</variation>
    <location>
        <position position="1839"/>
    </location>
</feature>
<feature type="sequence conflict" description="In Ref. 2; AAD20946, 3; AAD22973, 4; AAX77219 and 8; AAC50236." evidence="38" ref="2 3 4 8">
    <original>T</original>
    <variation>K</variation>
    <location>
        <position position="1891"/>
    </location>
</feature>
<feature type="sequence conflict" description="In Ref. 1; AAB50847." evidence="38" ref="1">
    <original>P</original>
    <variation>A</variation>
    <location>
        <position position="2491"/>
    </location>
</feature>
<feature type="strand" evidence="55">
    <location>
        <begin position="168"/>
        <end position="170"/>
    </location>
</feature>
<feature type="helix" evidence="55">
    <location>
        <begin position="171"/>
        <end position="205"/>
    </location>
</feature>
<feature type="strand" evidence="58">
    <location>
        <begin position="414"/>
        <end position="417"/>
    </location>
</feature>
<feature type="helix" evidence="58">
    <location>
        <begin position="419"/>
        <end position="428"/>
    </location>
</feature>
<feature type="helix" evidence="58">
    <location>
        <begin position="434"/>
        <end position="446"/>
    </location>
</feature>
<feature type="helix" evidence="58">
    <location>
        <begin position="451"/>
        <end position="456"/>
    </location>
</feature>
<feature type="turn" evidence="54">
    <location>
        <begin position="458"/>
        <end position="460"/>
    </location>
</feature>
<feature type="helix" evidence="58">
    <location>
        <begin position="463"/>
        <end position="473"/>
    </location>
</feature>
<feature type="turn" evidence="54">
    <location>
        <begin position="474"/>
        <end position="476"/>
    </location>
</feature>
<feature type="helix" evidence="56">
    <location>
        <begin position="617"/>
        <end position="629"/>
    </location>
</feature>
<feature type="turn" evidence="56">
    <location>
        <begin position="630"/>
        <end position="632"/>
    </location>
</feature>
<feature type="helix" evidence="56">
    <location>
        <begin position="634"/>
        <end position="640"/>
    </location>
</feature>
<feature type="strand" evidence="56">
    <location>
        <begin position="642"/>
        <end position="644"/>
    </location>
</feature>
<feature type="helix" evidence="56">
    <location>
        <begin position="646"/>
        <end position="655"/>
    </location>
</feature>
<feature type="helix" evidence="56">
    <location>
        <begin position="661"/>
        <end position="679"/>
    </location>
</feature>
<feature type="strand" evidence="57">
    <location>
        <begin position="1108"/>
        <end position="1110"/>
    </location>
</feature>
<feature type="strand" evidence="59">
    <location>
        <begin position="1352"/>
        <end position="1354"/>
    </location>
</feature>
<feature type="turn" evidence="59">
    <location>
        <begin position="1355"/>
        <end position="1358"/>
    </location>
</feature>
<feature type="strand" evidence="59">
    <location>
        <begin position="1359"/>
        <end position="1362"/>
    </location>
</feature>
<feature type="strand" evidence="53">
    <location>
        <begin position="1416"/>
        <end position="1420"/>
    </location>
</feature>
<feature type="turn" evidence="60">
    <location>
        <begin position="1451"/>
        <end position="1454"/>
    </location>
</feature>
<feature type="helix" evidence="62">
    <location>
        <begin position="2339"/>
        <end position="2347"/>
    </location>
</feature>
<feature type="helix" evidence="61">
    <location>
        <begin position="2351"/>
        <end position="2353"/>
    </location>
</feature>
<gene>
    <name evidence="35 39" type="primary">NCOR2</name>
    <name type="synonym">CTG26</name>
</gene>
<name>NCOR2_HUMAN</name>